<organism>
    <name type="scientific">Homo sapiens</name>
    <name type="common">Human</name>
    <dbReference type="NCBI Taxonomy" id="9606"/>
    <lineage>
        <taxon>Eukaryota</taxon>
        <taxon>Metazoa</taxon>
        <taxon>Chordata</taxon>
        <taxon>Craniata</taxon>
        <taxon>Vertebrata</taxon>
        <taxon>Euteleostomi</taxon>
        <taxon>Mammalia</taxon>
        <taxon>Eutheria</taxon>
        <taxon>Euarchontoglires</taxon>
        <taxon>Primates</taxon>
        <taxon>Haplorrhini</taxon>
        <taxon>Catarrhini</taxon>
        <taxon>Hominidae</taxon>
        <taxon>Homo</taxon>
    </lineage>
</organism>
<feature type="signal peptide">
    <location>
        <begin position="1"/>
        <end position="24"/>
    </location>
</feature>
<feature type="chain" id="PRO_0000041671" description="Uromodulin">
    <location>
        <begin position="25"/>
        <end position="614"/>
    </location>
</feature>
<feature type="chain" id="PRO_0000407909" description="Uromodulin, secreted form">
    <location>
        <begin position="25"/>
        <end position="587"/>
    </location>
</feature>
<feature type="propeptide" id="PRO_0000041672" description="Removed in mature form" evidence="2">
    <location>
        <begin position="615"/>
        <end position="640"/>
    </location>
</feature>
<feature type="domain" description="EGF-like 1" evidence="3">
    <location>
        <begin position="28"/>
        <end position="64"/>
    </location>
</feature>
<feature type="domain" description="EGF-like 2; calcium-binding" evidence="3">
    <location>
        <begin position="65"/>
        <end position="107"/>
    </location>
</feature>
<feature type="domain" description="EGF-like 3; calcium-binding" evidence="3">
    <location>
        <begin position="108"/>
        <end position="149"/>
    </location>
</feature>
<feature type="domain" description="EGF-like 4" evidence="40 42 43">
    <location>
        <begin position="292"/>
        <end position="323"/>
    </location>
</feature>
<feature type="domain" description="ZP" evidence="4">
    <location>
        <begin position="334"/>
        <end position="589"/>
    </location>
</feature>
<feature type="region of interest" description="Beta hairpin" evidence="43">
    <location>
        <begin position="150"/>
        <end position="171"/>
    </location>
</feature>
<feature type="region of interest" description="D10C" evidence="43">
    <location>
        <begin position="172"/>
        <end position="291"/>
    </location>
</feature>
<feature type="region of interest" description="ZP-N" evidence="40 41 42 43">
    <location>
        <begin position="334"/>
        <end position="429"/>
    </location>
</feature>
<feature type="region of interest" description="Flexible ZP-N/ZP-C linker; important for secretion and polymerization into filaments" evidence="28">
    <location>
        <begin position="430"/>
        <end position="453"/>
    </location>
</feature>
<feature type="region of interest" description="ZP-C" evidence="40 41 42 43">
    <location>
        <begin position="454"/>
        <end position="589"/>
    </location>
</feature>
<feature type="region of interest" description="Internal hydrophobic patch (IHP)" evidence="40 41 42">
    <location>
        <begin position="454"/>
        <end position="465"/>
    </location>
</feature>
<feature type="region of interest" description="Essential for cleavage by HPN" evidence="17 27 28">
    <location>
        <begin position="586"/>
        <end position="589"/>
    </location>
</feature>
<feature type="region of interest" description="External hydrophobic patch (EHP); regulates polymerization into filaments" evidence="17 40 42">
    <location>
        <begin position="598"/>
        <end position="606"/>
    </location>
</feature>
<feature type="site" description="Cleavage" evidence="16">
    <location>
        <begin position="587"/>
        <end position="588"/>
    </location>
</feature>
<feature type="lipid moiety-binding region" description="GPI-anchor amidated serine" evidence="2">
    <location>
        <position position="614"/>
    </location>
</feature>
<feature type="glycosylation site" description="N-linked (GlcNAc...) asparagine" evidence="30">
    <location>
        <position position="38"/>
    </location>
</feature>
<feature type="glycosylation site" description="N-linked (GlcNAc...) asparagine" evidence="30 35 48 49">
    <location>
        <position position="76"/>
    </location>
</feature>
<feature type="glycosylation site" description="N-linked (GlcNAc...) asparagine" evidence="30 35 48 49">
    <location>
        <position position="80"/>
    </location>
</feature>
<feature type="glycosylation site" description="N-linked (GlcNAc...) (complex) asparagine" evidence="21 28 30 35 48 49">
    <location>
        <position position="232"/>
    </location>
</feature>
<feature type="glycosylation site" description="N-linked (GlcNAc...) (high mannose) asparagine" evidence="30 35 48 49">
    <location>
        <position position="275"/>
    </location>
</feature>
<feature type="glycosylation site" description="N-linked (GlcNAc...) (complex) asparagine" evidence="21 30 32 35 44 45 48">
    <location>
        <position position="322"/>
    </location>
</feature>
<feature type="glycosylation site" description="N-linked (GlcNAc...) (complex) asparagine" evidence="21 30 31 32 35 44 45 46 47 48">
    <location>
        <position position="396"/>
    </location>
</feature>
<feature type="glycosylation site" description="N-linked (GlcNAc...) (complex) asparagine; alternate" evidence="30 31 32 35 44 45 46 47 48">
    <location>
        <position position="513"/>
    </location>
</feature>
<feature type="glycosylation site" description="N-linked (GlcNAc...) (high mannose) asparagine; alternate" evidence="30 31 32 44 45 46 47 48">
    <location>
        <position position="513"/>
    </location>
</feature>
<feature type="disulfide bond" evidence="3 35 48 49">
    <location>
        <begin position="32"/>
        <end position="41"/>
    </location>
</feature>
<feature type="disulfide bond" evidence="3 35 48 49">
    <location>
        <begin position="35"/>
        <end position="50"/>
    </location>
</feature>
<feature type="disulfide bond" evidence="3 35 48 49">
    <location>
        <begin position="52"/>
        <end position="63"/>
    </location>
</feature>
<feature type="disulfide bond" evidence="3 35 48 49">
    <location>
        <begin position="69"/>
        <end position="83"/>
    </location>
</feature>
<feature type="disulfide bond" evidence="3 35 48 49">
    <location>
        <begin position="77"/>
        <end position="92"/>
    </location>
</feature>
<feature type="disulfide bond" evidence="3 35 48 49">
    <location>
        <begin position="94"/>
        <end position="106"/>
    </location>
</feature>
<feature type="disulfide bond" evidence="3 35 48 49">
    <location>
        <begin position="112"/>
        <end position="126"/>
    </location>
</feature>
<feature type="disulfide bond" evidence="3 35 48 49">
    <location>
        <begin position="120"/>
        <end position="135"/>
    </location>
</feature>
<feature type="disulfide bond" evidence="3 35 48 49">
    <location>
        <begin position="137"/>
        <end position="148"/>
    </location>
</feature>
<feature type="disulfide bond" evidence="35 48 49">
    <location>
        <begin position="150"/>
        <end position="161"/>
    </location>
</feature>
<feature type="disulfide bond" evidence="35 48 49">
    <location>
        <begin position="155"/>
        <end position="170"/>
    </location>
</feature>
<feature type="disulfide bond" evidence="35 48 49">
    <location>
        <begin position="174"/>
        <end position="267"/>
    </location>
</feature>
<feature type="disulfide bond" evidence="35 48 49">
    <location>
        <begin position="195"/>
        <end position="282"/>
    </location>
</feature>
<feature type="disulfide bond" evidence="35 48 49">
    <location>
        <begin position="217"/>
        <end position="255"/>
    </location>
</feature>
<feature type="disulfide bond" evidence="35 48 49">
    <location>
        <begin position="223"/>
        <end position="287"/>
    </location>
</feature>
<feature type="disulfide bond" evidence="35 48 49">
    <location>
        <begin position="248"/>
        <end position="256"/>
    </location>
</feature>
<feature type="disulfide bond" evidence="28 32 35 44 45 48 49">
    <location>
        <begin position="297"/>
        <end position="306"/>
    </location>
</feature>
<feature type="disulfide bond" evidence="28 32 35 44 45 48 49">
    <location>
        <begin position="300"/>
        <end position="315"/>
    </location>
</feature>
<feature type="disulfide bond" evidence="28 32 35 44 45 48">
    <location>
        <begin position="317"/>
        <end position="347"/>
    </location>
</feature>
<feature type="disulfide bond" evidence="28 31 32 35 44 45 46 47 48">
    <location>
        <begin position="335"/>
        <end position="425"/>
    </location>
</feature>
<feature type="disulfide bond" evidence="28 31 32 35 44 46 47 48">
    <location>
        <begin position="366"/>
        <end position="389"/>
    </location>
</feature>
<feature type="disulfide bond" evidence="3 28 31 32 35 44 45 46 47 48">
    <location>
        <begin position="506"/>
        <end position="566"/>
    </location>
</feature>
<feature type="disulfide bond" evidence="28 31 32 35 44 45 47 48">
    <location>
        <begin position="527"/>
        <end position="582"/>
    </location>
</feature>
<feature type="disulfide bond" evidence="28 31 32 35 44 45 46 47 48">
    <location>
        <begin position="571"/>
        <end position="578"/>
    </location>
</feature>
<feature type="splice variant" id="VSP_054828" description="In isoform 5." evidence="37">
    <original>A</original>
    <variation>ARTKYNCPARWSWRTPQRGGDTEQGPDEDFTSQG</variation>
    <location>
        <position position="29"/>
    </location>
</feature>
<feature type="splice variant" id="VSP_017565" description="In isoform 2." evidence="37">
    <location>
        <begin position="67"/>
        <end position="199"/>
    </location>
</feature>
<feature type="splice variant" id="VSP_040973" description="In isoform 4." evidence="37">
    <location>
        <begin position="133"/>
        <end position="154"/>
    </location>
</feature>
<feature type="splice variant" id="VSP_017566" description="In isoform 3." evidence="38">
    <original>FVGQGGARMAETCVPVLRCNTAAPMWLNGT</original>
    <variation>P</variation>
    <location>
        <begin position="205"/>
        <end position="234"/>
    </location>
</feature>
<feature type="sequence variant" id="VAR_073052" description="In ADTKD1." evidence="12">
    <original>C</original>
    <variation>W</variation>
    <location>
        <position position="52"/>
    </location>
</feature>
<feature type="sequence variant" id="VAR_073053" description="In ADTKD1; results in defective trafficking of mutant protein to the plasma membrane; the mutant is retained in the ER." evidence="10 15">
    <original>D</original>
    <variation>A</variation>
    <location>
        <position position="59"/>
    </location>
</feature>
<feature type="sequence variant" id="VAR_025950" description="In ADTKD1; dbSNP:rs121917768." evidence="7">
    <original>C</original>
    <variation>Y</variation>
    <location>
        <position position="77"/>
    </location>
</feature>
<feature type="sequence variant" id="VAR_025951" description="In ADTKD1." evidence="9 26">
    <original>VCPEG</original>
    <variation>AASC</variation>
    <location>
        <begin position="93"/>
        <end position="97"/>
    </location>
</feature>
<feature type="sequence variant" id="VAR_017666" description="In ADTKD1; dbSNP:rs28934584." evidence="6">
    <original>G</original>
    <variation>C</variation>
    <location>
        <position position="103"/>
    </location>
</feature>
<feature type="sequence variant" id="VAR_071398" description="In ADTKD1; causes a delay in protein export to the plasma membrane due to a longer retention time in the ER; dbSNP:rs780462125." evidence="25">
    <original>V</original>
    <variation>E</variation>
    <location>
        <position position="109"/>
    </location>
</feature>
<feature type="sequence variant" id="VAR_073054" description="In ADTKD1." evidence="10">
    <original>C</original>
    <variation>R</variation>
    <location>
        <position position="112"/>
    </location>
</feature>
<feature type="sequence variant" id="VAR_077514" description="In ADTKD1; serum levels severely reduced; dbSNP:rs1555487621." evidence="29">
    <original>C</original>
    <variation>G</variation>
    <location>
        <position position="120"/>
    </location>
</feature>
<feature type="sequence variant" id="VAR_025952" description="In ADTKD1; dbSNP:rs121917769." evidence="7 10">
    <original>C</original>
    <variation>R</variation>
    <location>
        <position position="126"/>
    </location>
</feature>
<feature type="sequence variant" id="VAR_025953" description="In ADTKD1; results in defective trafficking of mutant protein to the plasma membrane; the mutant is retained in the ER; dbSNP:rs121917770." evidence="7 15">
    <original>N</original>
    <variation>S</variation>
    <location>
        <position position="128"/>
    </location>
</feature>
<feature type="sequence variant" id="VAR_073055" description="In ADTKD1." evidence="12">
    <original>C</original>
    <variation>S</variation>
    <location>
        <position position="135"/>
    </location>
</feature>
<feature type="sequence variant" id="VAR_025954" description="In ADTKD1; phenotype overlapping with medullary cystic kidney disease; causes a delay in protein export to the plasma membrane due to a longer retention time in the ER." evidence="11 15">
    <original>C</original>
    <variation>W</variation>
    <location>
        <position position="148"/>
    </location>
</feature>
<feature type="sequence variant" id="VAR_017667" description="In ADTKD1; dbSNP:rs28934582." evidence="6">
    <original>C</original>
    <variation>Y</variation>
    <location>
        <position position="148"/>
    </location>
</feature>
<feature type="sequence variant" id="VAR_025955" description="In ADTKD1; phenotype overlapping with medullary cystic kidney disease; causes a delay in protein export to the plasma membrane due to a longer retention time in the ER; results is abnormal intracellular polymerization of the mutant protein." evidence="11 15 26">
    <original>C</original>
    <variation>S</variation>
    <location>
        <position position="150"/>
    </location>
</feature>
<feature type="sequence variant" id="VAR_073056" description="Probable-disease association mutation found in a patient with cystic kidney disease; results in mutant retention in the ER; results is abnormal intracellular polymerization of the mutant protein." evidence="26">
    <original>C</original>
    <variation>R</variation>
    <location>
        <position position="155"/>
    </location>
</feature>
<feature type="sequence variant" id="VAR_073057" description="In ADTKD1." evidence="10">
    <original>C</original>
    <variation>Y</variation>
    <location>
        <position position="170"/>
    </location>
</feature>
<feature type="sequence variant" id="VAR_073058" description="In ADTKD1." evidence="10">
    <original>R</original>
    <variation>S</variation>
    <location>
        <position position="185"/>
    </location>
</feature>
<feature type="sequence variant" id="VAR_073059" description="In ADTKD1." evidence="12">
    <original>C</original>
    <variation>F</variation>
    <location>
        <position position="195"/>
    </location>
</feature>
<feature type="sequence variant" id="VAR_073060" description="In ADTKD1." evidence="12">
    <original>W</original>
    <variation>S</variation>
    <location>
        <position position="202"/>
    </location>
</feature>
<feature type="sequence variant" id="VAR_073061" description="In ADTKD1; results in defective trafficking of mutant protein to the plasma membrane; the mutant is retained in the ER." evidence="10 15">
    <original>R</original>
    <variation>G</variation>
    <location>
        <position position="204"/>
    </location>
</feature>
<feature type="sequence variant" id="VAR_073062" description="In ADTKD1; dbSNP:rs28934583." evidence="10">
    <original>C</original>
    <variation>G</variation>
    <location>
        <position position="217"/>
    </location>
</feature>
<feature type="sequence variant" id="VAR_017668" description="In ADTKD1; results in defective trafficking of mutant protein to the plasma membrane; the mutant is retained in the ER; dbSNP:rs28934583." evidence="6 15">
    <original>C</original>
    <variation>R</variation>
    <location>
        <position position="217"/>
    </location>
</feature>
<feature type="sequence variant" id="VAR_073063" description="In ADTKD1." evidence="10">
    <original>R</original>
    <variation>P</variation>
    <location>
        <position position="222"/>
    </location>
</feature>
<feature type="sequence variant" id="VAR_025956" description="In ADTKD1." evidence="8">
    <original>C</original>
    <variation>Y</variation>
    <location>
        <position position="223"/>
    </location>
</feature>
<feature type="sequence variant" id="VAR_025957" description="In ADTKD1; results in defective trafficking of mutant protein to the plasma membrane; the mutant is retained in the ER." evidence="9 15">
    <original>T</original>
    <variation>K</variation>
    <location>
        <position position="225"/>
    </location>
</feature>
<feature type="sequence variant" id="VAR_073064" description="In ADTKD1." evidence="10">
    <original>T</original>
    <variation>M</variation>
    <location>
        <position position="225"/>
    </location>
</feature>
<feature type="sequence variant" id="VAR_071399" description="In ADTKD1." evidence="24">
    <original>W</original>
    <variation>R</variation>
    <location>
        <position position="230"/>
    </location>
</feature>
<feature type="sequence variant" id="VAR_073065" description="In ADTKD1; dbSNP:rs1447458978." evidence="12">
    <original>P</original>
    <variation>L</variation>
    <location>
        <position position="236"/>
    </location>
</feature>
<feature type="sequence variant" id="VAR_071400" description="In ADTKD1; causes a delay in protein export to the plasma membrane due to a longer retention time in the ER." evidence="25">
    <original>P</original>
    <variation>Q</variation>
    <location>
        <position position="236"/>
    </location>
</feature>
<feature type="sequence variant" id="VAR_073066" description="In ADTKD1; results in defective trafficking of mutant protein to the plasma membrane; the mutant is retained in the ER." evidence="15">
    <original>P</original>
    <variation>R</variation>
    <location>
        <position position="236"/>
    </location>
</feature>
<feature type="sequence variant" id="VAR_025958" description="In ADTKD1; causes a delay in protein export to the plasma membrane due to a longer retention time in the ER; dbSNP:rs886043751." evidence="9 25">
    <original>C</original>
    <variation>W</variation>
    <location>
        <position position="248"/>
    </location>
</feature>
<feature type="sequence variant" id="VAR_025959" description="In ADTKD1; dbSNP:rs121917771." evidence="7">
    <original>C</original>
    <variation>Y</variation>
    <location>
        <position position="255"/>
    </location>
</feature>
<feature type="sequence variant" id="VAR_073067" description="In ADTKD1." evidence="10">
    <original>C</original>
    <variation>R</variation>
    <location>
        <position position="282"/>
    </location>
</feature>
<feature type="sequence variant" id="VAR_025960" description="In ADTKD1; dbSNP:rs121917772." evidence="7">
    <original>C</original>
    <variation>G</variation>
    <location>
        <position position="300"/>
    </location>
</feature>
<feature type="sequence variant" id="VAR_025961" description="In ADTKD1; causes a delay in protein export to the plasma membrane due to a longer retention time in the ER; dbSNP:rs121917773." evidence="11 15">
    <original>C</original>
    <variation>R</variation>
    <location>
        <position position="315"/>
    </location>
</feature>
<feature type="sequence variant" id="VAR_073068" description="In ADTKD1; dbSNP:rs1555487318." evidence="14">
    <original>Q</original>
    <variation>P</variation>
    <location>
        <position position="316"/>
    </location>
</feature>
<feature type="sequence variant" id="VAR_025962" description="In ADTKD1; phenotype overlapping with medullary cystic kidney disease; causes a delay in protein export to the plasma membrane due to a longer retention time in the ER." evidence="11">
    <original>C</original>
    <variation>Y</variation>
    <location>
        <position position="317"/>
    </location>
</feature>
<feature type="sequence variant" id="VAR_073069" description="In ADTKD1; causes a delay in protein export to the plasma membrane due to a longer retention time in the ER." evidence="13">
    <original>C</original>
    <variation>G</variation>
    <location>
        <position position="347"/>
    </location>
</feature>
<feature type="sequence variant" id="VAR_061993" description="In dbSNP:rs55772253.">
    <original>V</original>
    <variation>L</variation>
    <location>
        <position position="458"/>
    </location>
</feature>
<feature type="sequence variant" id="VAR_071401" description="In ADTKD1." evidence="20">
    <original>A</original>
    <variation>E</variation>
    <location>
        <position position="461"/>
    </location>
</feature>
<feature type="mutagenesis site" description="Abolishes polymerization and filament formation of the secreted form." evidence="28">
    <original>L</original>
    <variation>K</variation>
    <location>
        <position position="333"/>
    </location>
</feature>
<feature type="mutagenesis site" description="Abolishes polymerization. No effect on protein trafficking or secretion. Suppresses the dominant-negative loss of polymerization in 555-F-A-556 DEL or 586-A--A-589; when associated with 555-F-A-556 DEL or 586-A--A-589." evidence="32">
    <original>R</original>
    <variation>A</variation>
    <location>
        <position position="415"/>
    </location>
</feature>
<feature type="mutagenesis site" description="Abolishes polymerization and filament formation of the secreted form." evidence="28">
    <original>I</original>
    <variation>K</variation>
    <location>
        <position position="421"/>
    </location>
</feature>
<feature type="mutagenesis site" description="Impairs polymerization and filament formation of the secreted form." evidence="17">
    <original>D</original>
    <variation>L</variation>
    <location>
        <position position="430"/>
    </location>
</feature>
<feature type="mutagenesis site" description="Impairs polymerization and filament formation of the secreted form." evidence="17">
    <original>L</original>
    <variation>S</variation>
    <location>
        <position position="435"/>
    </location>
</feature>
<feature type="mutagenesis site" description="Leads to retention in the endoplasmic reticulum, probably due to misfolding." evidence="17">
    <original>V</original>
    <variation>R</variation>
    <location>
        <position position="458"/>
    </location>
</feature>
<feature type="mutagenesis site" description="Abolishes polymerization, in a dominant-negative manner. No effect on protein trafficking or secretion. Suppresses the dominant-negative loss of polymerization; when associated with A-415." evidence="32">
    <location>
        <begin position="555"/>
        <end position="556"/>
    </location>
</feature>
<feature type="mutagenesis site" description="Abolishes cleavage by HPN. Abolishes polymerization, in a dominant-negative manner. Suppresses the dominant-negative loss of polymerization; when associated with A-415." evidence="17 27 28 32">
    <original>RFRS</original>
    <variation>AAAA</variation>
    <location>
        <begin position="586"/>
        <end position="589"/>
    </location>
</feature>
<feature type="mutagenesis site" description="Decreased export from the endoplasmic reticulum, leading to decreased secretion. Impairs polymerization." evidence="17">
    <original>VLN</original>
    <variation>AAA</variation>
    <location>
        <begin position="598"/>
        <end position="600"/>
    </location>
</feature>
<feature type="mutagenesis site" description="Decreased export from the endoplasmic reticulum, leading to decreased secretion. Impairs polymerization." evidence="17">
    <original>GP</original>
    <variation>AA</variation>
    <location>
        <begin position="602"/>
        <end position="603"/>
    </location>
</feature>
<feature type="mutagenesis site" description="No effect on secretion. Does not impair polymerization." evidence="17">
    <original>TRK</original>
    <variation>AAA</variation>
    <location>
        <begin position="605"/>
        <end position="607"/>
    </location>
</feature>
<feature type="sequence conflict" description="In Ref. 4; BAG51560." evidence="39" ref="4">
    <original>T</original>
    <variation>A</variation>
    <location>
        <position position="288"/>
    </location>
</feature>
<feature type="sequence conflict" description="In Ref. 4; BAG51560." evidence="39" ref="4">
    <original>M</original>
    <variation>I</variation>
    <location>
        <position position="503"/>
    </location>
</feature>
<feature type="sequence conflict" description="In Ref. 2; AAA36799." evidence="39" ref="2">
    <original>H</original>
    <variation>D</variation>
    <location>
        <position position="565"/>
    </location>
</feature>
<feature type="helix" evidence="50">
    <location>
        <begin position="296"/>
        <end position="299"/>
    </location>
</feature>
<feature type="strand" evidence="50">
    <location>
        <begin position="304"/>
        <end position="308"/>
    </location>
</feature>
<feature type="strand" evidence="50">
    <location>
        <begin position="313"/>
        <end position="317"/>
    </location>
</feature>
<feature type="helix" evidence="51">
    <location>
        <begin position="319"/>
        <end position="321"/>
    </location>
</feature>
<feature type="helix" evidence="50">
    <location>
        <begin position="327"/>
        <end position="329"/>
    </location>
</feature>
<feature type="strand" evidence="50">
    <location>
        <begin position="332"/>
        <end position="335"/>
    </location>
</feature>
<feature type="strand" evidence="50">
    <location>
        <begin position="337"/>
        <end position="345"/>
    </location>
</feature>
<feature type="helix" evidence="50">
    <location>
        <begin position="346"/>
        <end position="350"/>
    </location>
</feature>
<feature type="turn" evidence="50">
    <location>
        <begin position="351"/>
        <end position="353"/>
    </location>
</feature>
<feature type="strand" evidence="51">
    <location>
        <begin position="358"/>
        <end position="363"/>
    </location>
</feature>
<feature type="strand" evidence="52">
    <location>
        <begin position="369"/>
        <end position="371"/>
    </location>
</feature>
<feature type="strand" evidence="51">
    <location>
        <begin position="372"/>
        <end position="374"/>
    </location>
</feature>
<feature type="strand" evidence="50">
    <location>
        <begin position="377"/>
        <end position="387"/>
    </location>
</feature>
<feature type="helix" evidence="50">
    <location>
        <begin position="388"/>
        <end position="390"/>
    </location>
</feature>
<feature type="strand" evidence="50">
    <location>
        <begin position="392"/>
        <end position="395"/>
    </location>
</feature>
<feature type="strand" evidence="50">
    <location>
        <begin position="397"/>
        <end position="408"/>
    </location>
</feature>
<feature type="turn" evidence="50">
    <location>
        <begin position="411"/>
        <end position="414"/>
    </location>
</feature>
<feature type="strand" evidence="50">
    <location>
        <begin position="419"/>
        <end position="428"/>
    </location>
</feature>
<feature type="helix" evidence="50">
    <location>
        <begin position="431"/>
        <end position="437"/>
    </location>
</feature>
<feature type="strand" evidence="50">
    <location>
        <begin position="438"/>
        <end position="441"/>
    </location>
</feature>
<feature type="strand" evidence="50">
    <location>
        <begin position="443"/>
        <end position="450"/>
    </location>
</feature>
<feature type="turn" evidence="50">
    <location>
        <begin position="451"/>
        <end position="453"/>
    </location>
</feature>
<feature type="strand" evidence="50">
    <location>
        <begin position="454"/>
        <end position="465"/>
    </location>
</feature>
<feature type="strand" evidence="50">
    <location>
        <begin position="473"/>
        <end position="475"/>
    </location>
</feature>
<feature type="strand" evidence="50">
    <location>
        <begin position="477"/>
        <end position="479"/>
    </location>
</feature>
<feature type="strand" evidence="50">
    <location>
        <begin position="485"/>
        <end position="494"/>
    </location>
</feature>
<feature type="turn" evidence="50">
    <location>
        <begin position="496"/>
        <end position="498"/>
    </location>
</feature>
<feature type="strand" evidence="50">
    <location>
        <begin position="499"/>
        <end position="512"/>
    </location>
</feature>
<feature type="strand" evidence="50">
    <location>
        <begin position="520"/>
        <end position="524"/>
    </location>
</feature>
<feature type="strand" evidence="50">
    <location>
        <begin position="527"/>
        <end position="529"/>
    </location>
</feature>
<feature type="strand" evidence="50">
    <location>
        <begin position="535"/>
        <end position="550"/>
    </location>
</feature>
<feature type="helix" evidence="50">
    <location>
        <begin position="552"/>
        <end position="555"/>
    </location>
</feature>
<feature type="strand" evidence="51">
    <location>
        <begin position="556"/>
        <end position="558"/>
    </location>
</feature>
<feature type="strand" evidence="50">
    <location>
        <begin position="560"/>
        <end position="572"/>
    </location>
</feature>
<feature type="turn" evidence="50">
    <location>
        <begin position="573"/>
        <end position="575"/>
    </location>
</feature>
<feature type="helix" evidence="50">
    <location>
        <begin position="595"/>
        <end position="597"/>
    </location>
</feature>
<feature type="strand" evidence="50">
    <location>
        <begin position="598"/>
        <end position="606"/>
    </location>
</feature>
<gene>
    <name type="primary">UMOD</name>
</gene>
<protein>
    <recommendedName>
        <fullName>Uromodulin</fullName>
    </recommendedName>
    <alternativeName>
        <fullName>Tamm-Horsfall urinary glycoprotein</fullName>
        <shortName>THP</shortName>
    </alternativeName>
    <component>
        <recommendedName>
            <fullName>Uromodulin, secreted form</fullName>
        </recommendedName>
    </component>
</protein>
<name>UROM_HUMAN</name>
<evidence type="ECO:0000250" key="1">
    <source>
        <dbReference type="UniProtKB" id="Q91X17"/>
    </source>
</evidence>
<evidence type="ECO:0000255" key="2"/>
<evidence type="ECO:0000255" key="3">
    <source>
        <dbReference type="PROSITE-ProRule" id="PRU00076"/>
    </source>
</evidence>
<evidence type="ECO:0000255" key="4">
    <source>
        <dbReference type="PROSITE-ProRule" id="PRU00375"/>
    </source>
</evidence>
<evidence type="ECO:0000269" key="5">
    <source>
    </source>
</evidence>
<evidence type="ECO:0000269" key="6">
    <source>
    </source>
</evidence>
<evidence type="ECO:0000269" key="7">
    <source>
    </source>
</evidence>
<evidence type="ECO:0000269" key="8">
    <source>
    </source>
</evidence>
<evidence type="ECO:0000269" key="9">
    <source>
    </source>
</evidence>
<evidence type="ECO:0000269" key="10">
    <source>
    </source>
</evidence>
<evidence type="ECO:0000269" key="11">
    <source>
    </source>
</evidence>
<evidence type="ECO:0000269" key="12">
    <source>
    </source>
</evidence>
<evidence type="ECO:0000269" key="13">
    <source>
    </source>
</evidence>
<evidence type="ECO:0000269" key="14">
    <source>
    </source>
</evidence>
<evidence type="ECO:0000269" key="15">
    <source>
    </source>
</evidence>
<evidence type="ECO:0000269" key="16">
    <source>
    </source>
</evidence>
<evidence type="ECO:0000269" key="17">
    <source>
    </source>
</evidence>
<evidence type="ECO:0000269" key="18">
    <source>
    </source>
</evidence>
<evidence type="ECO:0000269" key="19">
    <source>
    </source>
</evidence>
<evidence type="ECO:0000269" key="20">
    <source>
    </source>
</evidence>
<evidence type="ECO:0000269" key="21">
    <source>
    </source>
</evidence>
<evidence type="ECO:0000269" key="22">
    <source>
    </source>
</evidence>
<evidence type="ECO:0000269" key="23">
    <source>
    </source>
</evidence>
<evidence type="ECO:0000269" key="24">
    <source>
    </source>
</evidence>
<evidence type="ECO:0000269" key="25">
    <source>
    </source>
</evidence>
<evidence type="ECO:0000269" key="26">
    <source>
    </source>
</evidence>
<evidence type="ECO:0000269" key="27">
    <source>
    </source>
</evidence>
<evidence type="ECO:0000269" key="28">
    <source>
    </source>
</evidence>
<evidence type="ECO:0000269" key="29">
    <source>
    </source>
</evidence>
<evidence type="ECO:0000269" key="30">
    <source>
    </source>
</evidence>
<evidence type="ECO:0000269" key="31">
    <source>
    </source>
</evidence>
<evidence type="ECO:0000269" key="32">
    <source>
    </source>
</evidence>
<evidence type="ECO:0000269" key="33">
    <source>
    </source>
</evidence>
<evidence type="ECO:0000269" key="34">
    <source>
    </source>
</evidence>
<evidence type="ECO:0000269" key="35">
    <source>
    </source>
</evidence>
<evidence type="ECO:0000269" key="36">
    <source>
    </source>
</evidence>
<evidence type="ECO:0000303" key="37">
    <source>
    </source>
</evidence>
<evidence type="ECO:0000303" key="38">
    <source>
    </source>
</evidence>
<evidence type="ECO:0000305" key="39"/>
<evidence type="ECO:0000305" key="40">
    <source>
    </source>
</evidence>
<evidence type="ECO:0000305" key="41">
    <source>
    </source>
</evidence>
<evidence type="ECO:0000305" key="42">
    <source>
    </source>
</evidence>
<evidence type="ECO:0000305" key="43">
    <source>
    </source>
</evidence>
<evidence type="ECO:0007744" key="44">
    <source>
        <dbReference type="PDB" id="6TQK"/>
    </source>
</evidence>
<evidence type="ECO:0007744" key="45">
    <source>
        <dbReference type="PDB" id="6TQL"/>
    </source>
</evidence>
<evidence type="ECO:0007744" key="46">
    <source>
        <dbReference type="PDB" id="6ZS5"/>
    </source>
</evidence>
<evidence type="ECO:0007744" key="47">
    <source>
        <dbReference type="PDB" id="6ZYA"/>
    </source>
</evidence>
<evidence type="ECO:0007744" key="48">
    <source>
        <dbReference type="PDB" id="7PFP"/>
    </source>
</evidence>
<evidence type="ECO:0007744" key="49">
    <source>
        <dbReference type="PDB" id="7Q3N"/>
    </source>
</evidence>
<evidence type="ECO:0007829" key="50">
    <source>
        <dbReference type="PDB" id="4WRN"/>
    </source>
</evidence>
<evidence type="ECO:0007829" key="51">
    <source>
        <dbReference type="PDB" id="6TQK"/>
    </source>
</evidence>
<evidence type="ECO:0007829" key="52">
    <source>
        <dbReference type="PDB" id="6ZS5"/>
    </source>
</evidence>
<proteinExistence type="evidence at protein level"/>
<sequence>MGQPSLTWMLMVVVASWFITTAATDTSEARWCSECHSNATCTEDEAVTTCTCQEGFTGDGLTCVDLDECAIPGAHNCSANSSCVNTPGSFSCVCPEGFRLSPGLGCTDVDECAEPGLSHCHALATCVNVVGSYLCVCPAGYRGDGWHCECSPGSCGPGLDCVPEGDALVCADPCQAHRTLDEYWRSTEYGEGYACDTDLRGWYRFVGQGGARMAETCVPVLRCNTAAPMWLNGTHPSSDEGIVSRKACAHWSGHCCLWDASVQVKACAGGYYVYNLTAPPECHLAYCTDPSSVEGTCEECSIDEDCKSNNGRWHCQCKQDFNITDISLLEHRLECGANDMKVSLGKCQLKSLGFDKVFMYLSDSRCSGFNDRDNRDWVSVVTPARDGPCGTVLTRNETHATYSNTLYLADEIIIRDLNIKINFACSYPLDMKVSLKTALQPMVSALNIRVGGTGMFTVRMALFQTPSYTQPYQGSSVTLSTEAFLYVGTMLDGGDLSRFALLMTNCYATPSSNATDPLKYFIIQDRCPHTRDSTIQVVENGESSQGRFSVQMFRFAGNYDLVYLHCEVYLCDTMNEKCKPTCSGTRFRSGSVIDQSRVLNLGPITRKGVQATVSRAFSSLGLLKVWLPLLLSATLTLTFQ</sequence>
<keyword id="KW-0002">3D-structure</keyword>
<keyword id="KW-0025">Alternative splicing</keyword>
<keyword id="KW-1003">Cell membrane</keyword>
<keyword id="KW-0966">Cell projection</keyword>
<keyword id="KW-1186">Ciliopathy</keyword>
<keyword id="KW-0969">Cilium</keyword>
<keyword id="KW-0903">Direct protein sequencing</keyword>
<keyword id="KW-0225">Disease variant</keyword>
<keyword id="KW-1015">Disulfide bond</keyword>
<keyword id="KW-0245">EGF-like domain</keyword>
<keyword id="KW-0325">Glycoprotein</keyword>
<keyword id="KW-0336">GPI-anchor</keyword>
<keyword id="KW-0391">Immunity</keyword>
<keyword id="KW-0399">Innate immunity</keyword>
<keyword id="KW-0449">Lipoprotein</keyword>
<keyword id="KW-0472">Membrane</keyword>
<keyword id="KW-0983">Nephronophthisis</keyword>
<keyword id="KW-1267">Proteomics identification</keyword>
<keyword id="KW-1185">Reference proteome</keyword>
<keyword id="KW-0677">Repeat</keyword>
<keyword id="KW-0964">Secreted</keyword>
<keyword id="KW-0732">Signal</keyword>
<comment type="function">
    <molecule>Uromodulin</molecule>
    <text evidence="19 34 39">Functions in biogenesis and organization of the apical membrane of epithelial cells of the thick ascending limb of Henle's loop (TALH), where it promotes formation of complex filamentous gel-like structure that may play a role in the water barrier permeability (Probable). May serve as a receptor for binding and endocytosis of cytokines (IL-1, IL-2) and TNF (PubMed:3498215). Facilitates neutrophil migration across renal epithelia (PubMed:20798515).</text>
</comment>
<comment type="function">
    <molecule>Uromodulin, secreted form</molecule>
    <text evidence="1 5 30">In the urine, may contribute to colloid osmotic pressure, retards passage of positively charged electrolytes, and inhibits formation of liquid containing supersaturated salts and subsequent formation of salt crystals (By similarity). Protects against urinary tract infections by binding to type 1 fimbriated E.coli (PubMed:11134021, PubMed:32616672). Binds to bacterial adhesin fimH which mediates the stable formation of bacterial aggregates, prevents the binding of E.coli to uroplakins UPK1A and UPK1B which act as urothelial receptors for type I fimbriae, and allows for pathogen clearance through micturation (PubMed:11134021, PubMed:32616672). Also promotes aggregation of other bacteria including K.pneumoniae, P.aeruginosa and S.mitis and so may also protect against other uropathogens (PubMed:32616672).</text>
</comment>
<comment type="subunit">
    <molecule>Uromodulin, secreted form</molecule>
    <text evidence="17 27 28 30 31 32">Homodimer that then polymerizes into long filaments (PubMed:19005207, PubMed:26673890, PubMed:26811476, PubMed:32815518, PubMed:33196145). The filaments can additionally assemble laterally to form a sheet (PubMed:33196145). The filaments consist of a zigzag-shaped backbone with laterally protruding arms which interact with bacterial adhesin fimH (PubMed:32616672, PubMed:33196145). Two fimH molecules can bind to a single UMOD monomer (PubMed:32616672).</text>
</comment>
<comment type="interaction">
    <interactant intactId="EBI-2819647">
        <id>P07911</id>
    </interactant>
    <interactant intactId="EBI-26568155">
        <id>PRO_0000315044</id>
        <label>COLEC11</label>
        <dbReference type="UniProtKB" id="Q9BWP8"/>
    </interactant>
    <organismsDiffer>false</organismsDiffer>
    <experiments>2</experiments>
</comment>
<comment type="subcellular location">
    <subcellularLocation>
        <location evidence="23 25 27 36">Apical cell membrane</location>
        <topology evidence="22">Lipid-anchor</topology>
        <topology evidence="22">GPI-anchor</topology>
    </subcellularLocation>
    <subcellularLocation>
        <location evidence="36">Basolateral cell membrane</location>
        <topology evidence="22">Lipid-anchor</topology>
        <topology evidence="22">GPI-anchor</topology>
    </subcellularLocation>
    <subcellularLocation>
        <location evidence="18">Cell projection</location>
        <location evidence="18">Cilium membrane</location>
    </subcellularLocation>
    <text evidence="16 18 28 33 36">Only a small fraction sorts to the basolateral pole of tubular epithelial cells compared to apical localization (PubMed:22776760). Secreted into urine after cleavage (PubMed:18375198, PubMed:26811476). Colocalizes with NPHP1 and KIF3A (PubMed:20172860).</text>
</comment>
<comment type="subcellular location">
    <molecule>Uromodulin, secreted form</molecule>
    <subcellularLocation>
        <location evidence="16 17 27 28 33 36">Secreted</location>
    </subcellularLocation>
    <text evidence="16 28 33 36">Detected in urine.</text>
</comment>
<comment type="alternative products">
    <event type="alternative splicing"/>
    <isoform>
        <id>P07911-1</id>
        <name>1</name>
        <sequence type="displayed"/>
    </isoform>
    <isoform>
        <id>P07911-2</id>
        <name>2</name>
        <sequence type="described" ref="VSP_017565"/>
    </isoform>
    <isoform>
        <id>P07911-3</id>
        <name>3</name>
        <sequence type="described" ref="VSP_017566"/>
    </isoform>
    <isoform>
        <id>P07911-4</id>
        <name>4</name>
        <sequence type="described" ref="VSP_040973"/>
    </isoform>
    <isoform>
        <id>P07911-5</id>
        <name>5</name>
        <sequence type="described" ref="VSP_054828"/>
    </isoform>
</comment>
<comment type="tissue specificity">
    <text evidence="16 23 25 33 36">Expressed in the tubular cells of the kidney. Most abundant protein in normal urine (at protein level). Synthesized exclusively in the kidney. Expressed exclusively by epithelial cells of the thick ascending limb of Henle's loop (TALH) and of distal convoluted tubule lumen.</text>
</comment>
<comment type="domain">
    <text evidence="28 31 32 35">The ZP domain mediates polymerization, leading to the formation of long filaments. The core of the filament consists of interlocked ZP domains which assemble into a helical structure. Each ZP domain consists of an N-terminal (ZP-N) and C-terminal (ZP-C) region connected by a flexible linker; the linker allows the ZP domain to wrap around the ZP-C subdomain of the preceding subunit. The heavily glycosylated N-terminal part of the protein (containing several EGF-like domains) forms branches which protrude from the core and are involved in pathogen capture.</text>
</comment>
<comment type="PTM">
    <text evidence="17 21 27 28 30 31 32">N-glycosylated (PubMed:19005207, PubMed:26673890, PubMed:26811476, PubMed:32815518, PubMed:33196145). N-glycan heterogeneity at Asn-232: Hex7HexNAc6 (major) and dHex1Hex7HexNAc6 (minor); at Asn-322: dHex1Hex6HexNAc5 (minor), dHex1Hex7HexNAc6 (major) and dHex1Hex8HexNAc7 (minor); at Asn-396: Hex6HexNAc5 (major), dHex1Hex6HexNAc5 (minor) and Hex7HexNAc6 (minor) (PubMed:22171320). Glycosylated Asn-232 interacts with E.coli adhesin fimH (PubMed:32616672). Other complex glycosylation sites may serve as binding sites for proteins from other bacteria inclduding K.pneumoniae, P.aeruginosa and S.mitis (PubMed:32616672).</text>
</comment>
<comment type="PTM">
    <text evidence="16 17 27">Proteolytically cleaved at a conserved C-terminal proteolytic cleavage site to generate the secreted form found in urine (PubMed:18375198, PubMed:19005207). This cleavage is catalyzed by HPN (PubMed:26673890).</text>
</comment>
<comment type="disease" evidence="6 7 8 9 10 11 12 13 14 15 20 23 24 25 26 29">
    <disease id="DI-00493">
        <name>Tubulointerstitial kidney disease, autosomal dominant 1</name>
        <acronym>ADTKD1</acronym>
        <description>A form of autosomal dominant tubulointerstitial kidney disease, a genetically heterogeneous disorder characterized by slowly progressive loss of kidney function, bland urinary sediment, hyperuricemia, absent or mildly increased albuminuria, lack of severe hypertension during the early stages, and normal or small kidneys on ultrasound. Renal histology shows variable abnormalities including interstitial fibrosis with tubular atrophy, microcystic dilatation of the tubules, thickening of tubular basement membranes, medullary cysts, and secondary glomerulosclerotic or glomerulocystic changes with abnormal glomerular tufting. There is significant variability, as well as incomplete penetrance.</description>
        <dbReference type="MIM" id="162000"/>
    </disease>
    <text>The disease is caused by variants affecting the gene represented in this entry.</text>
</comment>
<reference key="1">
    <citation type="journal article" date="1987" name="Science">
        <title>Identification of human uromodulin as the Tamm-Horsfall urinary glycoprotein.</title>
        <authorList>
            <person name="Pennica D."/>
            <person name="Kohr W.J."/>
            <person name="Kuang W.-J."/>
            <person name="Glaister D."/>
            <person name="Aggarwal B.B."/>
            <person name="Chen E.Y."/>
            <person name="Goeddel D.V."/>
        </authorList>
    </citation>
    <scope>NUCLEOTIDE SEQUENCE [MRNA] (ISOFORM 1)</scope>
    <scope>SUBCELLULAR LOCATION</scope>
    <scope>TISSUE SPECIFICITY</scope>
</reference>
<reference key="2">
    <citation type="journal article" date="1987" name="Science">
        <title>Uromodulin (Tamm-Horsfall glycoprotein): a renal ligand for lymphokines.</title>
        <authorList>
            <person name="Hession C."/>
            <person name="Decker J.M."/>
            <person name="Sherblom A.P."/>
            <person name="Kumar S."/>
            <person name="Yue C.C."/>
            <person name="Mattaliano R.J."/>
            <person name="Tizard R."/>
            <person name="Kawashima E."/>
            <person name="Schmeissner U."/>
            <person name="Heletky S."/>
            <person name="Chow E.P."/>
            <person name="Burne C.A."/>
            <person name="Shaw A."/>
            <person name="Muchmore A.V."/>
        </authorList>
    </citation>
    <scope>NUCLEOTIDE SEQUENCE [MRNA] (ISOFORM 1)</scope>
    <scope>PARTIAL PROTEIN SEQUENCE</scope>
    <scope>FUNCTION</scope>
</reference>
<reference key="3">
    <citation type="journal article" date="2002" name="J. Med. Genet.">
        <title>Mutations of the UMOD gene are responsible for medullary cystic kidney disease 2 and familial juvenile hyperuricaemic nephropathy.</title>
        <authorList>
            <person name="Hart T.C."/>
            <person name="Gorry M.C."/>
            <person name="Hart P.S."/>
            <person name="Woodard A.S."/>
            <person name="Shihabi Z."/>
            <person name="Sandhu J."/>
            <person name="Shirts B."/>
            <person name="Xu L."/>
            <person name="Zhu H."/>
            <person name="Barmada M.M."/>
            <person name="Bleyer A.J."/>
        </authorList>
    </citation>
    <scope>NUCLEOTIDE SEQUENCE [GENOMIC DNA]</scope>
    <scope>VARIANTS ADTKD1 CYS-103; TYR-148 AND ARG-217</scope>
</reference>
<reference key="4">
    <citation type="journal article" date="2004" name="Nat. Genet.">
        <title>Complete sequencing and characterization of 21,243 full-length human cDNAs.</title>
        <authorList>
            <person name="Ota T."/>
            <person name="Suzuki Y."/>
            <person name="Nishikawa T."/>
            <person name="Otsuki T."/>
            <person name="Sugiyama T."/>
            <person name="Irie R."/>
            <person name="Wakamatsu A."/>
            <person name="Hayashi K."/>
            <person name="Sato H."/>
            <person name="Nagai K."/>
            <person name="Kimura K."/>
            <person name="Makita H."/>
            <person name="Sekine M."/>
            <person name="Obayashi M."/>
            <person name="Nishi T."/>
            <person name="Shibahara T."/>
            <person name="Tanaka T."/>
            <person name="Ishii S."/>
            <person name="Yamamoto J."/>
            <person name="Saito K."/>
            <person name="Kawai Y."/>
            <person name="Isono Y."/>
            <person name="Nakamura Y."/>
            <person name="Nagahari K."/>
            <person name="Murakami K."/>
            <person name="Yasuda T."/>
            <person name="Iwayanagi T."/>
            <person name="Wagatsuma M."/>
            <person name="Shiratori A."/>
            <person name="Sudo H."/>
            <person name="Hosoiri T."/>
            <person name="Kaku Y."/>
            <person name="Kodaira H."/>
            <person name="Kondo H."/>
            <person name="Sugawara M."/>
            <person name="Takahashi M."/>
            <person name="Kanda K."/>
            <person name="Yokoi T."/>
            <person name="Furuya T."/>
            <person name="Kikkawa E."/>
            <person name="Omura Y."/>
            <person name="Abe K."/>
            <person name="Kamihara K."/>
            <person name="Katsuta N."/>
            <person name="Sato K."/>
            <person name="Tanikawa M."/>
            <person name="Yamazaki M."/>
            <person name="Ninomiya K."/>
            <person name="Ishibashi T."/>
            <person name="Yamashita H."/>
            <person name="Murakawa K."/>
            <person name="Fujimori K."/>
            <person name="Tanai H."/>
            <person name="Kimata M."/>
            <person name="Watanabe M."/>
            <person name="Hiraoka S."/>
            <person name="Chiba Y."/>
            <person name="Ishida S."/>
            <person name="Ono Y."/>
            <person name="Takiguchi S."/>
            <person name="Watanabe S."/>
            <person name="Yosida M."/>
            <person name="Hotuta T."/>
            <person name="Kusano J."/>
            <person name="Kanehori K."/>
            <person name="Takahashi-Fujii A."/>
            <person name="Hara H."/>
            <person name="Tanase T.-O."/>
            <person name="Nomura Y."/>
            <person name="Togiya S."/>
            <person name="Komai F."/>
            <person name="Hara R."/>
            <person name="Takeuchi K."/>
            <person name="Arita M."/>
            <person name="Imose N."/>
            <person name="Musashino K."/>
            <person name="Yuuki H."/>
            <person name="Oshima A."/>
            <person name="Sasaki N."/>
            <person name="Aotsuka S."/>
            <person name="Yoshikawa Y."/>
            <person name="Matsunawa H."/>
            <person name="Ichihara T."/>
            <person name="Shiohata N."/>
            <person name="Sano S."/>
            <person name="Moriya S."/>
            <person name="Momiyama H."/>
            <person name="Satoh N."/>
            <person name="Takami S."/>
            <person name="Terashima Y."/>
            <person name="Suzuki O."/>
            <person name="Nakagawa S."/>
            <person name="Senoh A."/>
            <person name="Mizoguchi H."/>
            <person name="Goto Y."/>
            <person name="Shimizu F."/>
            <person name="Wakebe H."/>
            <person name="Hishigaki H."/>
            <person name="Watanabe T."/>
            <person name="Sugiyama A."/>
            <person name="Takemoto M."/>
            <person name="Kawakami B."/>
            <person name="Yamazaki M."/>
            <person name="Watanabe K."/>
            <person name="Kumagai A."/>
            <person name="Itakura S."/>
            <person name="Fukuzumi Y."/>
            <person name="Fujimori Y."/>
            <person name="Komiyama M."/>
            <person name="Tashiro H."/>
            <person name="Tanigami A."/>
            <person name="Fujiwara T."/>
            <person name="Ono T."/>
            <person name="Yamada K."/>
            <person name="Fujii Y."/>
            <person name="Ozaki K."/>
            <person name="Hirao M."/>
            <person name="Ohmori Y."/>
            <person name="Kawabata A."/>
            <person name="Hikiji T."/>
            <person name="Kobatake N."/>
            <person name="Inagaki H."/>
            <person name="Ikema Y."/>
            <person name="Okamoto S."/>
            <person name="Okitani R."/>
            <person name="Kawakami T."/>
            <person name="Noguchi S."/>
            <person name="Itoh T."/>
            <person name="Shigeta K."/>
            <person name="Senba T."/>
            <person name="Matsumura K."/>
            <person name="Nakajima Y."/>
            <person name="Mizuno T."/>
            <person name="Morinaga M."/>
            <person name="Sasaki M."/>
            <person name="Togashi T."/>
            <person name="Oyama M."/>
            <person name="Hata H."/>
            <person name="Watanabe M."/>
            <person name="Komatsu T."/>
            <person name="Mizushima-Sugano J."/>
            <person name="Satoh T."/>
            <person name="Shirai Y."/>
            <person name="Takahashi Y."/>
            <person name="Nakagawa K."/>
            <person name="Okumura K."/>
            <person name="Nagase T."/>
            <person name="Nomura N."/>
            <person name="Kikuchi H."/>
            <person name="Masuho Y."/>
            <person name="Yamashita R."/>
            <person name="Nakai K."/>
            <person name="Yada T."/>
            <person name="Nakamura Y."/>
            <person name="Ohara O."/>
            <person name="Isogai T."/>
            <person name="Sugano S."/>
        </authorList>
    </citation>
    <scope>NUCLEOTIDE SEQUENCE [LARGE SCALE MRNA] (ISOFORMS 2; 4 AND 5)</scope>
    <source>
        <tissue>Kidney</tissue>
    </source>
</reference>
<reference key="5">
    <citation type="journal article" date="2004" name="Nature">
        <title>The sequence and analysis of duplication-rich human chromosome 16.</title>
        <authorList>
            <person name="Martin J."/>
            <person name="Han C."/>
            <person name="Gordon L.A."/>
            <person name="Terry A."/>
            <person name="Prabhakar S."/>
            <person name="She X."/>
            <person name="Xie G."/>
            <person name="Hellsten U."/>
            <person name="Chan Y.M."/>
            <person name="Altherr M."/>
            <person name="Couronne O."/>
            <person name="Aerts A."/>
            <person name="Bajorek E."/>
            <person name="Black S."/>
            <person name="Blumer H."/>
            <person name="Branscomb E."/>
            <person name="Brown N.C."/>
            <person name="Bruno W.J."/>
            <person name="Buckingham J.M."/>
            <person name="Callen D.F."/>
            <person name="Campbell C.S."/>
            <person name="Campbell M.L."/>
            <person name="Campbell E.W."/>
            <person name="Caoile C."/>
            <person name="Challacombe J.F."/>
            <person name="Chasteen L.A."/>
            <person name="Chertkov O."/>
            <person name="Chi H.C."/>
            <person name="Christensen M."/>
            <person name="Clark L.M."/>
            <person name="Cohn J.D."/>
            <person name="Denys M."/>
            <person name="Detter J.C."/>
            <person name="Dickson M."/>
            <person name="Dimitrijevic-Bussod M."/>
            <person name="Escobar J."/>
            <person name="Fawcett J.J."/>
            <person name="Flowers D."/>
            <person name="Fotopulos D."/>
            <person name="Glavina T."/>
            <person name="Gomez M."/>
            <person name="Gonzales E."/>
            <person name="Goodstein D."/>
            <person name="Goodwin L.A."/>
            <person name="Grady D.L."/>
            <person name="Grigoriev I."/>
            <person name="Groza M."/>
            <person name="Hammon N."/>
            <person name="Hawkins T."/>
            <person name="Haydu L."/>
            <person name="Hildebrand C.E."/>
            <person name="Huang W."/>
            <person name="Israni S."/>
            <person name="Jett J."/>
            <person name="Jewett P.B."/>
            <person name="Kadner K."/>
            <person name="Kimball H."/>
            <person name="Kobayashi A."/>
            <person name="Krawczyk M.-C."/>
            <person name="Leyba T."/>
            <person name="Longmire J.L."/>
            <person name="Lopez F."/>
            <person name="Lou Y."/>
            <person name="Lowry S."/>
            <person name="Ludeman T."/>
            <person name="Manohar C.F."/>
            <person name="Mark G.A."/>
            <person name="McMurray K.L."/>
            <person name="Meincke L.J."/>
            <person name="Morgan J."/>
            <person name="Moyzis R.K."/>
            <person name="Mundt M.O."/>
            <person name="Munk A.C."/>
            <person name="Nandkeshwar R.D."/>
            <person name="Pitluck S."/>
            <person name="Pollard M."/>
            <person name="Predki P."/>
            <person name="Parson-Quintana B."/>
            <person name="Ramirez L."/>
            <person name="Rash S."/>
            <person name="Retterer J."/>
            <person name="Ricke D.O."/>
            <person name="Robinson D.L."/>
            <person name="Rodriguez A."/>
            <person name="Salamov A."/>
            <person name="Saunders E.H."/>
            <person name="Scott D."/>
            <person name="Shough T."/>
            <person name="Stallings R.L."/>
            <person name="Stalvey M."/>
            <person name="Sutherland R.D."/>
            <person name="Tapia R."/>
            <person name="Tesmer J.G."/>
            <person name="Thayer N."/>
            <person name="Thompson L.S."/>
            <person name="Tice H."/>
            <person name="Torney D.C."/>
            <person name="Tran-Gyamfi M."/>
            <person name="Tsai M."/>
            <person name="Ulanovsky L.E."/>
            <person name="Ustaszewska A."/>
            <person name="Vo N."/>
            <person name="White P.S."/>
            <person name="Williams A.L."/>
            <person name="Wills P.L."/>
            <person name="Wu J.-R."/>
            <person name="Wu K."/>
            <person name="Yang J."/>
            <person name="DeJong P."/>
            <person name="Bruce D."/>
            <person name="Doggett N.A."/>
            <person name="Deaven L."/>
            <person name="Schmutz J."/>
            <person name="Grimwood J."/>
            <person name="Richardson P."/>
            <person name="Rokhsar D.S."/>
            <person name="Eichler E.E."/>
            <person name="Gilna P."/>
            <person name="Lucas S.M."/>
            <person name="Myers R.M."/>
            <person name="Rubin E.M."/>
            <person name="Pennacchio L.A."/>
        </authorList>
    </citation>
    <scope>NUCLEOTIDE SEQUENCE [LARGE SCALE GENOMIC DNA]</scope>
</reference>
<reference key="6">
    <citation type="journal article" date="2004" name="Genome Res.">
        <title>The status, quality, and expansion of the NIH full-length cDNA project: the Mammalian Gene Collection (MGC).</title>
        <authorList>
            <consortium name="The MGC Project Team"/>
        </authorList>
    </citation>
    <scope>NUCLEOTIDE SEQUENCE [LARGE SCALE MRNA] (ISOFORM 3)</scope>
    <source>
        <tissue>Kidney</tissue>
    </source>
</reference>
<reference key="7">
    <citation type="journal article" date="2008" name="Biochem. Biophys. Res. Commun.">
        <title>Urinary uromodulin carries an intact ZP domain generated by a conserved C-terminal proteolytic cleavage.</title>
        <authorList>
            <person name="Santambrogio S."/>
            <person name="Cattaneo A."/>
            <person name="Bernascone I."/>
            <person name="Schwend T."/>
            <person name="Jovine L."/>
            <person name="Bachi A."/>
            <person name="Rampoldi L."/>
        </authorList>
    </citation>
    <scope>PROTEIN SEQUENCE OF 578-587</scope>
    <scope>PROTEOLYTIC CLEAVAGE</scope>
    <scope>IDENTIFICATION BY MASS SPECTROMETRY</scope>
    <scope>SUBCELLULAR LOCATION</scope>
    <scope>TISSUE SPECIFICITY</scope>
</reference>
<reference key="8">
    <citation type="journal article" date="1981" name="J. Anat.">
        <title>Localization of Tamm-Horsfall glycoprotein in the human kidney using immuno-fluorescence and immuno-electron microscopical techniques.</title>
        <authorList>
            <person name="Sikri K.L."/>
            <person name="Foster C.L."/>
            <person name="MacHugh N."/>
            <person name="Marshall R.D."/>
        </authorList>
    </citation>
    <scope>TISSUE SPECIFICITY</scope>
    <scope>SUBCELLULAR LOCATION</scope>
</reference>
<reference key="9">
    <citation type="journal article" date="1990" name="J. Biol. Chem.">
        <title>Uromodulin (Tamm-Horsfall glycoprotein/uromucoid) is a phosphatidylinositol-linked membrane protein.</title>
        <authorList>
            <person name="Rindler M.J."/>
            <person name="Naik S.S."/>
            <person name="Li N."/>
            <person name="Hoops T.C."/>
            <person name="Peraldi M.-N."/>
        </authorList>
    </citation>
    <scope>GPI-ANCHOR</scope>
    <scope>SUBCELLULAR LOCATION</scope>
</reference>
<reference key="10">
    <citation type="journal article" date="2001" name="J. Biol. Chem.">
        <title>Tamm-Horsfall protein binds to type 1 fimbriated Escherichia coli and prevents E. coli from binding to uroplakin Ia and Ib receptors.</title>
        <authorList>
            <person name="Pak J."/>
            <person name="Pu Y."/>
            <person name="Zhang Z.T."/>
            <person name="Hasty D.L."/>
            <person name="Wu X.R."/>
        </authorList>
    </citation>
    <scope>FUNCTION</scope>
</reference>
<reference key="11">
    <citation type="journal article" date="2009" name="Mol. Biol. Cell">
        <title>Analysis of uromodulin polymerization provides new insights into the mechanisms regulating ZP domain-mediated protein assembly.</title>
        <authorList>
            <person name="Schaeffer C."/>
            <person name="Santambrogio S."/>
            <person name="Perucca S."/>
            <person name="Casari G."/>
            <person name="Rampoldi L."/>
        </authorList>
    </citation>
    <scope>SUBCELLULAR LOCATION</scope>
    <scope>SUBUNIT</scope>
    <scope>MUTAGENESIS OF ASP-430; LEU-435; VAL-458; 586-ARG--SER-589; 598-VAL--ASN-600; 602-GLY-PRO-603 AND 605-THR--LYS-607</scope>
    <scope>REGION</scope>
    <scope>GLYCOSYLATION</scope>
</reference>
<reference key="12">
    <citation type="journal article" date="2010" name="Cell. Physiol. Biochem.">
        <title>Uromodulin facilitates neutrophil migration across renal epithelial monolayers.</title>
        <authorList>
            <person name="Schmid M."/>
            <person name="Prajczer S."/>
            <person name="Gruber L.N."/>
            <person name="Bertocchi C."/>
            <person name="Gandini R."/>
            <person name="Pfaller W."/>
            <person name="Jennings P."/>
            <person name="Joannidis M."/>
        </authorList>
    </citation>
    <scope>FUNCTION</scope>
    <scope>SUBCELLULAR LOCATION</scope>
</reference>
<reference key="13">
    <citation type="journal article" date="2010" name="Hum. Mol. Genet.">
        <title>Uromodulin is expressed in renal primary cilia and UMOD mutations result in decreased ciliary uromodulin expression.</title>
        <authorList>
            <person name="Zaucke F."/>
            <person name="Boehnlein J.M."/>
            <person name="Steffens S."/>
            <person name="Polishchuk R.S."/>
            <person name="Rampoldi L."/>
            <person name="Fischer A."/>
            <person name="Pasch A."/>
            <person name="Boehm C.W."/>
            <person name="Baasner A."/>
            <person name="Attanasio M."/>
            <person name="Hoppe B."/>
            <person name="Hopfer H."/>
            <person name="Beck B.B."/>
            <person name="Sayer J.A."/>
            <person name="Hildebrandt F."/>
            <person name="Wolf M.T."/>
        </authorList>
    </citation>
    <scope>SUBCELLULAR LOCATION</scope>
</reference>
<reference key="14">
    <citation type="journal article" date="2012" name="Mol. Cell. Proteomics">
        <title>Human urinary glycoproteomics; attachment site specific analysis of N- and O-linked glycosylations by CID and ECD.</title>
        <authorList>
            <person name="Halim A."/>
            <person name="Nilsson J."/>
            <person name="Ruetschi U."/>
            <person name="Hesse C."/>
            <person name="Larson G."/>
        </authorList>
    </citation>
    <scope>GLYCOSYLATION AT ASN-232; ASN-322 AND ASN-396</scope>
    <scope>STRUCTURE OF CARBOHYDRATES</scope>
    <scope>IDENTIFICATION BY MASS SPECTROMETRY</scope>
</reference>
<reference key="15">
    <citation type="journal article" date="2012" name="Am. J. Nephrol.">
        <title>Novel uromodulin mutation in familial juvenile hyperuricemic nephropathy.</title>
        <authorList>
            <person name="Wei X."/>
            <person name="Xu R."/>
            <person name="Yang Z."/>
            <person name="Li Z."/>
            <person name="Liao Y."/>
            <person name="Johnson R.J."/>
            <person name="Yu X."/>
            <person name="Chen W."/>
        </authorList>
    </citation>
    <scope>SUBCELLULAR LOCATION</scope>
    <scope>TISSUE SPECIFICITY</scope>
    <scope>INVOLVEMENT IN ADTKD1</scope>
</reference>
<reference key="16">
    <citation type="journal article" date="2015" name="Elife">
        <title>The serine protease hepsin mediates urinary secretion and polymerisation of Zona Pellucida domain protein uromodulin.</title>
        <authorList>
            <person name="Brunati M."/>
            <person name="Perucca S."/>
            <person name="Han L."/>
            <person name="Cattaneo A."/>
            <person name="Consolato F."/>
            <person name="Andolfo A."/>
            <person name="Schaeffer C."/>
            <person name="Olinger E."/>
            <person name="Peng J."/>
            <person name="Santambrogio S."/>
            <person name="Perrier R."/>
            <person name="Li S."/>
            <person name="Bokhove M."/>
            <person name="Bachi A."/>
            <person name="Hummler E."/>
            <person name="Devuyst O."/>
            <person name="Wu Q."/>
            <person name="Jovine L."/>
            <person name="Rampoldi L."/>
        </authorList>
    </citation>
    <scope>SUBUNIT</scope>
    <scope>ELECTRON MICROSCOPY</scope>
    <scope>SUBCELLULAR LOCATION</scope>
    <scope>GLYCOSYLATION</scope>
    <scope>MUTAGENESIS OF 586-ARG--SER-589</scope>
    <scope>PROTEOLYTIC CLEAVAGE BY HPN</scope>
    <scope>IDENTIFICATION BY MASS SPECTROMETRY</scope>
</reference>
<reference key="17">
    <citation type="journal article" date="2020" name="Science">
        <title>Architecture and function of human uromodulin filaments in urinary tract infections.</title>
        <authorList>
            <person name="Weiss G.L."/>
            <person name="Stanisich J.J."/>
            <person name="Sauer M.M."/>
            <person name="Lin C.W."/>
            <person name="Eras J."/>
            <person name="Zyla D.S."/>
            <person name="Trueck J."/>
            <person name="Devuyst O."/>
            <person name="Aebi M."/>
            <person name="Pilhofer M."/>
            <person name="Glockshuber R."/>
        </authorList>
    </citation>
    <scope>FUNCTION</scope>
    <scope>INTERACTION WITH E.COLI FIMH</scope>
    <scope>GLYCOSYLATION AT ASN-38; ASN-76; ASN-80; ASN-232; ASN-275; ASN-322; ASN-396 AND ASN-513</scope>
</reference>
<reference key="18">
    <citation type="journal article" date="2016" name="Proc. Natl. Acad. Sci. U.S.A.">
        <title>A structured interdomain linker directs self-polymerization of human uromodulin.</title>
        <authorList>
            <person name="Bokhove M."/>
            <person name="Nishimura K."/>
            <person name="Brunati M."/>
            <person name="Han L."/>
            <person name="de Sanctis D."/>
            <person name="Rampoldi L."/>
            <person name="Jovine L."/>
        </authorList>
    </citation>
    <scope>X-RAY CRYSTALLOGRAPHY (3.2 ANGSTROMS) OF 295-610</scope>
    <scope>ELECTRON MICROSCOPY</scope>
    <scope>SUBUNIT</scope>
    <scope>SUBCELLULAR LOCATION</scope>
    <scope>DISULFIDE BOND</scope>
    <scope>DOMAIN</scope>
    <scope>GLYCOSYLATION AT ASN-396</scope>
    <scope>MUTAGENESIS OF LEU-333; ILE-421 AND 586-ARG--SER-589</scope>
    <scope>REGION</scope>
</reference>
<reference evidence="46 47" key="19">
    <citation type="journal article" date="2020" name="Elife">
        <title>The cryo-EM structure of the human uromodulin filament core reveals a unique assembly mechanism.</title>
        <authorList>
            <person name="Stanisich J.J."/>
            <person name="Zyla D.S."/>
            <person name="Afanasyev P."/>
            <person name="Xu J."/>
            <person name="Kipp A."/>
            <person name="Olinger E."/>
            <person name="Devuyst O."/>
            <person name="Pilhofer M."/>
            <person name="Boehringer D."/>
            <person name="Glockshuber R."/>
        </authorList>
    </citation>
    <scope>STRUCTURE BY ELECTRON MICROSCOPY (3.50 ANGSTROMS) OF 328-584</scope>
    <scope>SUBUNIT</scope>
    <scope>DOMAIN</scope>
    <scope>GLYCOSYLATION AT ASN-396 AND ASN-513</scope>
    <scope>DISULFIDE BONDS</scope>
</reference>
<reference evidence="44 45" key="20">
    <citation type="journal article" date="2020" name="EMBO J.">
        <title>Cryo-EM structure of native human uromodulin, a zona pellucida module polymer.</title>
        <authorList>
            <person name="Stsiapanava A."/>
            <person name="Xu C."/>
            <person name="Brunati M."/>
            <person name="Zamora-Caballero S."/>
            <person name="Schaeffer C."/>
            <person name="Bokhove M."/>
            <person name="Han L."/>
            <person name="Hebert H."/>
            <person name="Carroni M."/>
            <person name="Yasumasu S."/>
            <person name="Rampoldi L."/>
            <person name="Wu B."/>
            <person name="Jovine L."/>
        </authorList>
    </citation>
    <scope>STRUCTURE BY ELECTRON MICROSCOPY (3.35 ANGSTROMS) OF 292-587</scope>
    <scope>SUBUNIT</scope>
    <scope>DOMAIN</scope>
    <scope>GLYCOSYLATION AT ASN-322; ASN-396 AND ASN-513</scope>
    <scope>DISULFIDE BONDS</scope>
    <scope>MUTAGENESIS OF ARG-415; 555-PHE-ALA-556 AND 586-ARG--SER-589</scope>
</reference>
<reference evidence="48 49" key="21">
    <citation type="journal article" date="2022" name="Nat. Struct. Mol. Biol.">
        <title>Structure of the decoy module of human glycoprotein 2 and uromodulin and its interaction with bacterial adhesin FimH.</title>
        <authorList>
            <person name="Stsiapanava A."/>
            <person name="Xu C."/>
            <person name="Nishio S."/>
            <person name="Han L."/>
            <person name="Yamakawa N."/>
            <person name="Carroni M."/>
            <person name="Tunyasuvunakool K."/>
            <person name="Jumper J."/>
            <person name="de Sanctis D."/>
            <person name="Wu B."/>
            <person name="Jovine L."/>
        </authorList>
    </citation>
    <scope>STRUCTURE BY ELECTRON MICROSCOPY (6.10 ANGSTROMS) OF 25-587</scope>
    <scope>FUNCTION</scope>
    <scope>INTERACTION WITH E.COLI FIMH</scope>
    <scope>DISULFIDE BONDS</scope>
    <scope>GLYCOSYLATION AT ASN-76; ASN-80; ASN-232; ASN-275; ASN-322; ASN-396 AND ASN-513</scope>
</reference>
<reference key="22">
    <citation type="journal article" date="2003" name="Am. J. Kidney Dis.">
        <title>Renal manifestations of a mutation in the uromodulin (Tamm Horsfall protein) gene.</title>
        <authorList>
            <person name="Bleyer A.J."/>
            <person name="Trachtman H."/>
            <person name="Sandhu J."/>
            <person name="Gorry M.C."/>
            <person name="Hart T.C."/>
        </authorList>
    </citation>
    <scope>VARIANT ADTKD1 TYR-223</scope>
</reference>
<reference key="23">
    <citation type="journal article" date="2003" name="Hum. Mol. Genet.">
        <title>Allelism of MCKD, FJHN and GCKD caused by impairment of uromodulin export dynamics.</title>
        <authorList>
            <person name="Rampoldi L."/>
            <person name="Caridi G."/>
            <person name="Santon D."/>
            <person name="Boaretto F."/>
            <person name="Bernascone I."/>
            <person name="Lamorte G."/>
            <person name="Tardanico R."/>
            <person name="Dagnino M."/>
            <person name="Colussi G."/>
            <person name="Scolari F."/>
            <person name="Ghiggeri G.M."/>
            <person name="Amoroso A."/>
            <person name="Casari G."/>
        </authorList>
    </citation>
    <scope>INVOLVEMENT IN ADTKD1</scope>
    <scope>VARIANTS ADTKD1 TRP-148; SER-150; ARG-315 AND TYR-317</scope>
    <scope>CHARACTERIZATION OF VARIANTS ADTKD1 TRP-148; SER-150; ARG-315 AND TYR-317</scope>
</reference>
<reference key="24">
    <citation type="journal article" date="2003" name="J. Am. Soc. Nephrol.">
        <title>A cluster of mutations in the UMOD gene causes familial juvenile hyperuricemic nephropathy with abnormal expression of uromodulin.</title>
        <authorList>
            <person name="Dahan K."/>
            <person name="Devuyst O."/>
            <person name="Smaers M."/>
            <person name="Vertommen D."/>
            <person name="Loute G."/>
            <person name="Poux J.M."/>
            <person name="Viron B."/>
            <person name="Jacquot C."/>
            <person name="Gagnadoux M.F."/>
            <person name="Chauveau D."/>
            <person name="Buchler M."/>
            <person name="Cochat P."/>
            <person name="Cosyns J.P."/>
            <person name="Mougenot B."/>
            <person name="Rider M.H."/>
            <person name="Antignac C."/>
            <person name="Verellen-Dumoulin C."/>
            <person name="Pirson Y."/>
        </authorList>
    </citation>
    <scope>INVOLVEMENT IN ADTKD1</scope>
    <scope>VARIANTS ADTKD1 ALA-59; ARG-112; ARG-126; TYR-170; SER-185; GLY-204; GLY-217; PRO-222; MET-225 AND ARG-282</scope>
</reference>
<reference key="25">
    <citation type="journal article" date="2003" name="J. Clin. Endocrinol. Metab.">
        <title>UROMODULIN mutations cause familial juvenile hyperuricemic nephropathy.</title>
        <authorList>
            <person name="Turner J.J.O."/>
            <person name="Stacey J.M."/>
            <person name="Harding B."/>
            <person name="Kotanko P."/>
            <person name="Lhotta K."/>
            <person name="Puig J.G."/>
            <person name="Roberts I."/>
            <person name="Torres R.J."/>
            <person name="Thakker R.V."/>
        </authorList>
    </citation>
    <scope>VARIANTS ADTKD1 TYR-77; ARG-126; SER-128; TYR-255 AND GLY-300</scope>
</reference>
<reference key="26">
    <citation type="journal article" date="2003" name="Kidney Int.">
        <title>Mutations of the Uromodulin gene in MCKD type 2 patients cluster in exon 4, which encodes three EGF-like domains.</title>
        <authorList>
            <person name="Wolf M.T.F."/>
            <person name="Mucha B.E."/>
            <person name="Attanasio M."/>
            <person name="Zalewski I."/>
            <person name="Karle S.M."/>
            <person name="Neumann H.P.H."/>
            <person name="Rahman N."/>
            <person name="Bader B."/>
            <person name="Baldamus C.A."/>
            <person name="Otto E."/>
            <person name="Witzgall R."/>
            <person name="Fuchshuber A."/>
            <person name="Hildebrandt F."/>
        </authorList>
    </citation>
    <scope>VARIANTS ADTKD1 93-VAL--GLY-97 DELINS ALA-ALA-SER-CYS; LYS-225 AND TRP-248</scope>
</reference>
<reference key="27">
    <citation type="journal article" date="2004" name="Kidney Int.">
        <title>Familial juvenile hyperuricemic nephropathy: detection of mutations in the uromodulin gene in five Japanese families.</title>
        <authorList>
            <person name="Kudo E."/>
            <person name="Kamatani N."/>
            <person name="Tezuka O."/>
            <person name="Taniguchi A."/>
            <person name="Yamanaka H."/>
            <person name="Yabe S."/>
            <person name="Osabe D."/>
            <person name="Shinohara S."/>
            <person name="Nomura K."/>
            <person name="Segawa M."/>
            <person name="Miyamoto T."/>
            <person name="Moritani M."/>
            <person name="Kunika K."/>
            <person name="Itakura M."/>
        </authorList>
    </citation>
    <scope>INVOLVEMENT IN ADTKD1</scope>
    <scope>VARIANTS ADTKD1 TRP-52; SER-135; PHE-195; SER-202 AND LEU-236</scope>
</reference>
<reference key="28">
    <citation type="journal article" date="2004" name="Nephrol. Dial. Transplant.">
        <title>Functional consequences of a novel uromodulin mutation in a family with familial juvenile hyperuricaemic nephropathy.</title>
        <authorList>
            <person name="Tinschert S."/>
            <person name="Ruf N."/>
            <person name="Bernascone I."/>
            <person name="Sacherer K."/>
            <person name="Lamorte G."/>
            <person name="Neumayer H.H."/>
            <person name="Nurnberg P."/>
            <person name="Luft F.C."/>
            <person name="Rampoldi L."/>
        </authorList>
    </citation>
    <scope>VARIANT ADTKD1 GLY-347</scope>
    <scope>CHARACTERIZATION OF VARIANT ADTKD1 GLY-347</scope>
</reference>
<reference key="29">
    <citation type="journal article" date="2005" name="Am. J. Kidney Dis.">
        <title>A novel pattern of mutation in uromodulin disorders: autosomal dominant medullary cystic kidney disease type 2, familial juvenile hyperuricemic nephropathy, and autosomal dominant glomerulocystic kidney disease.</title>
        <authorList>
            <person name="Lens X.M."/>
            <person name="Banet J.F."/>
            <person name="Outeda P."/>
            <person name="Barrio-Lucia V."/>
        </authorList>
    </citation>
    <scope>VARIANT ADTKD1 PRO-316</scope>
</reference>
<reference key="30">
    <citation type="journal article" date="2006" name="Traffic">
        <title>Defective intracellular trafficking of uromodulin mutant isoforms.</title>
        <authorList>
            <person name="Bernascone I."/>
            <person name="Vavassori S."/>
            <person name="Di Pentima A."/>
            <person name="Santambrogio S."/>
            <person name="Lamorte G."/>
            <person name="Amoroso A."/>
            <person name="Scolari F."/>
            <person name="Ghiggeri G.M."/>
            <person name="Casari G."/>
            <person name="Polishchuk R."/>
            <person name="Rampoldi L."/>
        </authorList>
    </citation>
    <scope>VARIANT ADTKD1 ARG-236</scope>
    <scope>CHARACTERIZATION OF VARIANTS ADTKD1 ALA-59; SER-128; TRP-148; SER-150; GLY-204; ARG-217; LYS-225; ARG-236 AND ARG-315</scope>
</reference>
<reference key="31">
    <citation type="journal article" date="2010" name="J. Korean Med. Sci.">
        <title>A case of familial juvenile hyperuricemic nephropathy with novel uromodulin gene mutation, a novel heterozygous missense mutation in Korea.</title>
        <authorList>
            <person name="Lee D.H."/>
            <person name="Kim J.K."/>
            <person name="Oh S.E."/>
            <person name="Noh J.W."/>
            <person name="Lee Y.K."/>
        </authorList>
    </citation>
    <scope>VARIANT ADTKD1 GLU-461</scope>
</reference>
<reference key="32">
    <citation type="journal article" date="2012" name="Case Rep. Nephrol. Urol.">
        <title>A Japanese family suffering from familial juvenile hyperuricemic nephropathy due to a rare mutation of the uromodulin gene.</title>
        <authorList>
            <person name="Nakayama M."/>
            <person name="Mori Y."/>
            <person name="Ota N."/>
            <person name="Ishida M."/>
            <person name="Shiotsu Y."/>
            <person name="Matsuoka E."/>
            <person name="Kado H."/>
            <person name="Ishida R."/>
            <person name="Nakata M."/>
            <person name="Kitani T."/>
            <person name="Tamagaki K."/>
            <person name="Sekita C."/>
            <person name="Taniguchi A."/>
        </authorList>
    </citation>
    <scope>VARIANT ADTKD1 ARG-230</scope>
</reference>
<reference key="33">
    <citation type="journal article" date="2013" name="Gene">
        <title>Novel UMOD mutations in familial juvenile hyperuricemic nephropathy lead to abnormal uromodulin intracellular trafficking.</title>
        <authorList>
            <person name="Liu M."/>
            <person name="Chen Y."/>
            <person name="Liang Y."/>
            <person name="Liu Y."/>
            <person name="Wang S."/>
            <person name="Hou P."/>
            <person name="Zhang H."/>
            <person name="Zhao M."/>
        </authorList>
    </citation>
    <scope>VARIANTS ADTKD1 GLU-109; GLN-236 AND TRP-248</scope>
    <scope>CHARACTERIZATION OF VARIANTS ADTKD1 GLU-109; GLN-236 AND TRP-248</scope>
    <scope>SUBCELLULAR LOCATION</scope>
    <scope>TISSUE SPECIFICITY</scope>
</reference>
<reference key="34">
    <citation type="journal article" date="2015" name="FEBS Lett.">
        <title>Pathogenic uromodulin mutations result in premature intracellular polymerization.</title>
        <authorList>
            <person name="Stewart A.P."/>
            <person name="Sandford R.N."/>
            <person name="Karet Frankl F.E."/>
            <person name="Edwardson J.M."/>
        </authorList>
    </citation>
    <scope>VARIANT ARG-155</scope>
    <scope>CHARACTERIZATION OF VARIANT ADTKD1 SER-150</scope>
    <scope>CHARACTERIZATION OF VARIANT ARG-155</scope>
</reference>
<reference key="35">
    <citation type="journal article" date="2017" name="Clin. Biochem.">
        <title>A new missense mutation in UMOD gene leads to severely reduced serum uromodulin concentrations - A tool for the diagnosis of uromodulin-associated kidney disease.</title>
        <authorList>
            <person name="Satanovskij R."/>
            <person name="Bader A."/>
            <person name="Block M."/>
            <person name="Herbst V."/>
            <person name="Schlumberger W."/>
            <person name="Haack T."/>
            <person name="Nockher W.A."/>
            <person name="Heemann U."/>
            <person name="Renders L."/>
            <person name="Schmaderer C."/>
            <person name="Angermann S."/>
            <person name="Wen M."/>
            <person name="Meitinger T."/>
            <person name="Scherberich J."/>
            <person name="Steubl D."/>
        </authorList>
    </citation>
    <scope>VARIANT ADTKD1 GLY-120</scope>
    <scope>CHARACTERIZATION OF VARIANT ADTKD1 GLY-120</scope>
</reference>
<accession>P07911</accession>
<accession>B3KP48</accession>
<accession>B3KRN9</accession>
<accession>E9PEA4</accession>
<accession>Q540J6</accession>
<accession>Q6ZS84</accession>
<accession>Q8IYG0</accession>
<dbReference type="EMBL" id="M15881">
    <property type="protein sequence ID" value="AAA36798.1"/>
    <property type="molecule type" value="mRNA"/>
</dbReference>
<dbReference type="EMBL" id="M17778">
    <property type="protein sequence ID" value="AAA36799.1"/>
    <property type="molecule type" value="mRNA"/>
</dbReference>
<dbReference type="EMBL" id="AY162970">
    <property type="protein sequence ID" value="AAO64446.1"/>
    <property type="molecule type" value="Genomic_DNA"/>
</dbReference>
<dbReference type="EMBL" id="AY162963">
    <property type="protein sequence ID" value="AAO64446.1"/>
    <property type="status" value="JOINED"/>
    <property type="molecule type" value="Genomic_DNA"/>
</dbReference>
<dbReference type="EMBL" id="AY162964">
    <property type="protein sequence ID" value="AAO64446.1"/>
    <property type="status" value="JOINED"/>
    <property type="molecule type" value="Genomic_DNA"/>
</dbReference>
<dbReference type="EMBL" id="AY162965">
    <property type="protein sequence ID" value="AAO64446.1"/>
    <property type="status" value="JOINED"/>
    <property type="molecule type" value="Genomic_DNA"/>
</dbReference>
<dbReference type="EMBL" id="AY162967">
    <property type="protein sequence ID" value="AAO64446.1"/>
    <property type="status" value="JOINED"/>
    <property type="molecule type" value="Genomic_DNA"/>
</dbReference>
<dbReference type="EMBL" id="AY162968">
    <property type="protein sequence ID" value="AAO64446.1"/>
    <property type="status" value="JOINED"/>
    <property type="molecule type" value="Genomic_DNA"/>
</dbReference>
<dbReference type="EMBL" id="AY162969">
    <property type="protein sequence ID" value="AAO64446.1"/>
    <property type="status" value="JOINED"/>
    <property type="molecule type" value="Genomic_DNA"/>
</dbReference>
<dbReference type="EMBL" id="AK127643">
    <property type="protein sequence ID" value="BAC87070.1"/>
    <property type="molecule type" value="mRNA"/>
</dbReference>
<dbReference type="EMBL" id="AK055722">
    <property type="protein sequence ID" value="BAG51560.1"/>
    <property type="molecule type" value="mRNA"/>
</dbReference>
<dbReference type="EMBL" id="AK091961">
    <property type="protein sequence ID" value="BAG52451.1"/>
    <property type="molecule type" value="mRNA"/>
</dbReference>
<dbReference type="EMBL" id="AC106796">
    <property type="status" value="NOT_ANNOTATED_CDS"/>
    <property type="molecule type" value="Genomic_DNA"/>
</dbReference>
<dbReference type="EMBL" id="BC035975">
    <property type="protein sequence ID" value="AAH35975.1"/>
    <property type="molecule type" value="mRNA"/>
</dbReference>
<dbReference type="CCDS" id="CCDS10583.1">
    <molecule id="P07911-1"/>
</dbReference>
<dbReference type="CCDS" id="CCDS61876.1">
    <molecule id="P07911-5"/>
</dbReference>
<dbReference type="PIR" id="A30452">
    <property type="entry name" value="A30452"/>
</dbReference>
<dbReference type="RefSeq" id="NP_001008390.1">
    <molecule id="P07911-1"/>
    <property type="nucleotide sequence ID" value="NM_001008389.3"/>
</dbReference>
<dbReference type="RefSeq" id="NP_001265543.1">
    <molecule id="P07911-5"/>
    <property type="nucleotide sequence ID" value="NM_001278614.2"/>
</dbReference>
<dbReference type="RefSeq" id="NP_001365161.1">
    <molecule id="P07911-1"/>
    <property type="nucleotide sequence ID" value="NM_001378232.1"/>
</dbReference>
<dbReference type="RefSeq" id="NP_001365162.1">
    <molecule id="P07911-1"/>
    <property type="nucleotide sequence ID" value="NM_001378233.1"/>
</dbReference>
<dbReference type="RefSeq" id="NP_003352.2">
    <molecule id="P07911-1"/>
    <property type="nucleotide sequence ID" value="NM_003361.4"/>
</dbReference>
<dbReference type="PDB" id="4WRN">
    <property type="method" value="X-ray"/>
    <property type="resolution" value="3.20 A"/>
    <property type="chains" value="A/B=295-610"/>
</dbReference>
<dbReference type="PDB" id="6TQK">
    <property type="method" value="EM"/>
    <property type="resolution" value="3.35 A"/>
    <property type="chains" value="A/B/C=292-587"/>
</dbReference>
<dbReference type="PDB" id="6TQL">
    <property type="method" value="EM"/>
    <property type="resolution" value="3.96 A"/>
    <property type="chains" value="A/B/C=292-584"/>
</dbReference>
<dbReference type="PDB" id="6ZS5">
    <property type="method" value="EM"/>
    <property type="resolution" value="3.50 A"/>
    <property type="chains" value="A/D=328-584"/>
</dbReference>
<dbReference type="PDB" id="6ZYA">
    <property type="method" value="EM"/>
    <property type="resolution" value="3.50 A"/>
    <property type="chains" value="A=328-584"/>
</dbReference>
<dbReference type="PDB" id="7PFP">
    <property type="method" value="EM"/>
    <property type="resolution" value="6.10 A"/>
    <property type="chains" value="A/B/C=25-587"/>
</dbReference>
<dbReference type="PDB" id="7Q3N">
    <property type="method" value="EM"/>
    <property type="resolution" value="7.40 A"/>
    <property type="chains" value="U=25-316"/>
</dbReference>
<dbReference type="PDBsum" id="4WRN"/>
<dbReference type="PDBsum" id="6TQK"/>
<dbReference type="PDBsum" id="6TQL"/>
<dbReference type="PDBsum" id="6ZS5"/>
<dbReference type="PDBsum" id="6ZYA"/>
<dbReference type="PDBsum" id="7PFP"/>
<dbReference type="PDBsum" id="7Q3N"/>
<dbReference type="EMDB" id="EMD-10553"/>
<dbReference type="EMDB" id="EMD-10554"/>
<dbReference type="EMDB" id="EMD-11388"/>
<dbReference type="EMDB" id="EMD-11471"/>
<dbReference type="EMDB" id="EMD-13378"/>
<dbReference type="EMDB" id="EMD-13794"/>
<dbReference type="SMR" id="P07911"/>
<dbReference type="BioGRID" id="113216">
    <property type="interactions" value="7"/>
</dbReference>
<dbReference type="FunCoup" id="P07911">
    <property type="interactions" value="12"/>
</dbReference>
<dbReference type="IntAct" id="P07911">
    <property type="interactions" value="19"/>
</dbReference>
<dbReference type="STRING" id="9606.ENSP00000379438"/>
<dbReference type="BindingDB" id="P07911"/>
<dbReference type="GlyConnect" id="613">
    <property type="glycosylation" value="204 N-Linked glycans (5 sites), 20 O-Linked glycans (13 sites)"/>
</dbReference>
<dbReference type="GlyCosmos" id="P07911">
    <property type="glycosylation" value="15 sites, 233 glycans"/>
</dbReference>
<dbReference type="GlyGen" id="P07911">
    <property type="glycosylation" value="18 sites, 385 N-linked glycans (8 sites), 9 O-linked glycans (8 sites)"/>
</dbReference>
<dbReference type="iPTMnet" id="P07911"/>
<dbReference type="PhosphoSitePlus" id="P07911"/>
<dbReference type="BioMuta" id="UMOD"/>
<dbReference type="DMDM" id="137116"/>
<dbReference type="MassIVE" id="P07911"/>
<dbReference type="PaxDb" id="9606-ENSP00000379438"/>
<dbReference type="PeptideAtlas" id="P07911"/>
<dbReference type="ProteomicsDB" id="19844"/>
<dbReference type="ProteomicsDB" id="52038">
    <molecule id="P07911-1"/>
</dbReference>
<dbReference type="ProteomicsDB" id="52039">
    <molecule id="P07911-2"/>
</dbReference>
<dbReference type="ProteomicsDB" id="52040">
    <molecule id="P07911-3"/>
</dbReference>
<dbReference type="ProteomicsDB" id="52041">
    <molecule id="P07911-4"/>
</dbReference>
<dbReference type="Antibodypedia" id="4003">
    <property type="antibodies" value="552 antibodies from 37 providers"/>
</dbReference>
<dbReference type="DNASU" id="7369"/>
<dbReference type="Ensembl" id="ENST00000396134.6">
    <molecule id="P07911-5"/>
    <property type="protein sequence ID" value="ENSP00000379438.2"/>
    <property type="gene ID" value="ENSG00000169344.16"/>
</dbReference>
<dbReference type="Ensembl" id="ENST00000396138.9">
    <molecule id="P07911-1"/>
    <property type="protein sequence ID" value="ENSP00000379442.5"/>
    <property type="gene ID" value="ENSG00000169344.16"/>
</dbReference>
<dbReference type="Ensembl" id="ENST00000570689.5">
    <molecule id="P07911-1"/>
    <property type="protein sequence ID" value="ENSP00000460548.1"/>
    <property type="gene ID" value="ENSG00000169344.16"/>
</dbReference>
<dbReference type="GeneID" id="7369"/>
<dbReference type="KEGG" id="hsa:7369"/>
<dbReference type="MANE-Select" id="ENST00000396138.9">
    <property type="protein sequence ID" value="ENSP00000379442.5"/>
    <property type="RefSeq nucleotide sequence ID" value="NM_003361.4"/>
    <property type="RefSeq protein sequence ID" value="NP_003352.2"/>
</dbReference>
<dbReference type="UCSC" id="uc002dgz.5">
    <molecule id="P07911-1"/>
    <property type="organism name" value="human"/>
</dbReference>
<dbReference type="AGR" id="HGNC:12559"/>
<dbReference type="CTD" id="7369"/>
<dbReference type="DisGeNET" id="7369"/>
<dbReference type="GeneCards" id="UMOD"/>
<dbReference type="GeneReviews" id="UMOD"/>
<dbReference type="HGNC" id="HGNC:12559">
    <property type="gene designation" value="UMOD"/>
</dbReference>
<dbReference type="HPA" id="ENSG00000169344">
    <property type="expression patterns" value="Tissue enriched (kidney)"/>
</dbReference>
<dbReference type="MalaCards" id="UMOD"/>
<dbReference type="MIM" id="162000">
    <property type="type" value="phenotype"/>
</dbReference>
<dbReference type="MIM" id="191845">
    <property type="type" value="gene"/>
</dbReference>
<dbReference type="neXtProt" id="NX_P07911"/>
<dbReference type="OpenTargets" id="ENSG00000169344"/>
<dbReference type="Orphanet" id="88950">
    <property type="disease" value="UMOD-related autosomal dominant tubulointerstitial kidney disease"/>
</dbReference>
<dbReference type="PharmGKB" id="PA37199"/>
<dbReference type="VEuPathDB" id="HostDB:ENSG00000169344"/>
<dbReference type="eggNOG" id="ENOG502QT6B">
    <property type="taxonomic scope" value="Eukaryota"/>
</dbReference>
<dbReference type="GeneTree" id="ENSGT00940000156742"/>
<dbReference type="HOGENOM" id="CLU_028679_1_0_1"/>
<dbReference type="InParanoid" id="P07911"/>
<dbReference type="OMA" id="PPECYLA"/>
<dbReference type="OrthoDB" id="2015116at2759"/>
<dbReference type="PAN-GO" id="P07911">
    <property type="GO annotations" value="5 GO annotations based on evolutionary models"/>
</dbReference>
<dbReference type="PhylomeDB" id="P07911"/>
<dbReference type="TreeFam" id="TF330284"/>
<dbReference type="PathwayCommons" id="P07911"/>
<dbReference type="Reactome" id="R-HSA-446203">
    <property type="pathway name" value="Asparagine N-linked glycosylation"/>
</dbReference>
<dbReference type="SignaLink" id="P07911"/>
<dbReference type="SIGNOR" id="P07911"/>
<dbReference type="BioGRID-ORCS" id="7369">
    <property type="hits" value="11 hits in 1147 CRISPR screens"/>
</dbReference>
<dbReference type="EvolutionaryTrace" id="P07911"/>
<dbReference type="GeneWiki" id="Tamm%E2%80%93Horsfall_protein"/>
<dbReference type="GenomeRNAi" id="7369"/>
<dbReference type="Pharos" id="P07911">
    <property type="development level" value="Tbio"/>
</dbReference>
<dbReference type="PRO" id="PR:P07911"/>
<dbReference type="Proteomes" id="UP000005640">
    <property type="component" value="Chromosome 16"/>
</dbReference>
<dbReference type="RNAct" id="P07911">
    <property type="molecule type" value="protein"/>
</dbReference>
<dbReference type="Bgee" id="ENSG00000169344">
    <property type="expression patterns" value="Expressed in renal medulla and 87 other cell types or tissues"/>
</dbReference>
<dbReference type="ExpressionAtlas" id="P07911">
    <property type="expression patterns" value="baseline and differential"/>
</dbReference>
<dbReference type="GO" id="GO:0016324">
    <property type="term" value="C:apical plasma membrane"/>
    <property type="evidence" value="ECO:0000314"/>
    <property type="project" value="UniProtKB"/>
</dbReference>
<dbReference type="GO" id="GO:0016323">
    <property type="term" value="C:basolateral plasma membrane"/>
    <property type="evidence" value="ECO:0000314"/>
    <property type="project" value="UniProtKB"/>
</dbReference>
<dbReference type="GO" id="GO:0009986">
    <property type="term" value="C:cell surface"/>
    <property type="evidence" value="ECO:0000318"/>
    <property type="project" value="GO_Central"/>
</dbReference>
<dbReference type="GO" id="GO:0060170">
    <property type="term" value="C:ciliary membrane"/>
    <property type="evidence" value="ECO:0007669"/>
    <property type="project" value="UniProtKB-SubCell"/>
</dbReference>
<dbReference type="GO" id="GO:0005929">
    <property type="term" value="C:cilium"/>
    <property type="evidence" value="ECO:0000314"/>
    <property type="project" value="UniProtKB"/>
</dbReference>
<dbReference type="GO" id="GO:0005783">
    <property type="term" value="C:endoplasmic reticulum"/>
    <property type="evidence" value="ECO:0007669"/>
    <property type="project" value="Ensembl"/>
</dbReference>
<dbReference type="GO" id="GO:0070062">
    <property type="term" value="C:extracellular exosome"/>
    <property type="evidence" value="ECO:0007005"/>
    <property type="project" value="UniProtKB"/>
</dbReference>
<dbReference type="GO" id="GO:0005615">
    <property type="term" value="C:extracellular space"/>
    <property type="evidence" value="ECO:0000318"/>
    <property type="project" value="GO_Central"/>
</dbReference>
<dbReference type="GO" id="GO:0019898">
    <property type="term" value="C:extrinsic component of membrane"/>
    <property type="evidence" value="ECO:0000304"/>
    <property type="project" value="ProtInc"/>
</dbReference>
<dbReference type="GO" id="GO:0005796">
    <property type="term" value="C:Golgi lumen"/>
    <property type="evidence" value="ECO:0000304"/>
    <property type="project" value="Reactome"/>
</dbReference>
<dbReference type="GO" id="GO:0016020">
    <property type="term" value="C:membrane"/>
    <property type="evidence" value="ECO:0000314"/>
    <property type="project" value="UniProtKB"/>
</dbReference>
<dbReference type="GO" id="GO:0098552">
    <property type="term" value="C:side of membrane"/>
    <property type="evidence" value="ECO:0007669"/>
    <property type="project" value="UniProtKB-KW"/>
</dbReference>
<dbReference type="GO" id="GO:0000922">
    <property type="term" value="C:spindle pole"/>
    <property type="evidence" value="ECO:0000314"/>
    <property type="project" value="UniProtKB"/>
</dbReference>
<dbReference type="GO" id="GO:0005509">
    <property type="term" value="F:calcium ion binding"/>
    <property type="evidence" value="ECO:0007669"/>
    <property type="project" value="InterPro"/>
</dbReference>
<dbReference type="GO" id="GO:0019864">
    <property type="term" value="F:IgG binding"/>
    <property type="evidence" value="ECO:0000314"/>
    <property type="project" value="BHF-UCL"/>
</dbReference>
<dbReference type="GO" id="GO:0140367">
    <property type="term" value="P:antibacterial innate immune response"/>
    <property type="evidence" value="ECO:0000314"/>
    <property type="project" value="UniProtKB"/>
</dbReference>
<dbReference type="GO" id="GO:0097190">
    <property type="term" value="P:apoptotic signaling pathway"/>
    <property type="evidence" value="ECO:0007669"/>
    <property type="project" value="Ensembl"/>
</dbReference>
<dbReference type="GO" id="GO:0006914">
    <property type="term" value="P:autophagy"/>
    <property type="evidence" value="ECO:0007669"/>
    <property type="project" value="Ensembl"/>
</dbReference>
<dbReference type="GO" id="GO:0006968">
    <property type="term" value="P:cellular defense response"/>
    <property type="evidence" value="ECO:0000304"/>
    <property type="project" value="ProtInc"/>
</dbReference>
<dbReference type="GO" id="GO:0034620">
    <property type="term" value="P:cellular response to unfolded protein"/>
    <property type="evidence" value="ECO:0007669"/>
    <property type="project" value="Ensembl"/>
</dbReference>
<dbReference type="GO" id="GO:0061077">
    <property type="term" value="P:chaperone-mediated protein folding"/>
    <property type="evidence" value="ECO:0007669"/>
    <property type="project" value="Ensembl"/>
</dbReference>
<dbReference type="GO" id="GO:0046720">
    <property type="term" value="P:citric acid secretion"/>
    <property type="evidence" value="ECO:0007669"/>
    <property type="project" value="Ensembl"/>
</dbReference>
<dbReference type="GO" id="GO:0072044">
    <property type="term" value="P:collecting duct development"/>
    <property type="evidence" value="ECO:0007669"/>
    <property type="project" value="Ensembl"/>
</dbReference>
<dbReference type="GO" id="GO:0097709">
    <property type="term" value="P:connective tissue replacement"/>
    <property type="evidence" value="ECO:0007669"/>
    <property type="project" value="Ensembl"/>
</dbReference>
<dbReference type="GO" id="GO:0050829">
    <property type="term" value="P:defense response to Gram-negative bacterium"/>
    <property type="evidence" value="ECO:0000314"/>
    <property type="project" value="UniProtKB"/>
</dbReference>
<dbReference type="GO" id="GO:0007029">
    <property type="term" value="P:endoplasmic reticulum organization"/>
    <property type="evidence" value="ECO:0007669"/>
    <property type="project" value="Ensembl"/>
</dbReference>
<dbReference type="GO" id="GO:0036503">
    <property type="term" value="P:ERAD pathway"/>
    <property type="evidence" value="ECO:0007669"/>
    <property type="project" value="Ensembl"/>
</dbReference>
<dbReference type="GO" id="GO:0003094">
    <property type="term" value="P:glomerular filtration"/>
    <property type="evidence" value="ECO:0007669"/>
    <property type="project" value="Ensembl"/>
</dbReference>
<dbReference type="GO" id="GO:0007157">
    <property type="term" value="P:heterophilic cell-cell adhesion via plasma membrane cell adhesion molecules"/>
    <property type="evidence" value="ECO:0000314"/>
    <property type="project" value="BHF-UCL"/>
</dbReference>
<dbReference type="GO" id="GO:0006954">
    <property type="term" value="P:inflammatory response"/>
    <property type="evidence" value="ECO:0007669"/>
    <property type="project" value="Ensembl"/>
</dbReference>
<dbReference type="GO" id="GO:0006874">
    <property type="term" value="P:intracellular calcium ion homeostasis"/>
    <property type="evidence" value="ECO:0007669"/>
    <property type="project" value="Ensembl"/>
</dbReference>
<dbReference type="GO" id="GO:0030644">
    <property type="term" value="P:intracellular chloride ion homeostasis"/>
    <property type="evidence" value="ECO:0007669"/>
    <property type="project" value="Ensembl"/>
</dbReference>
<dbReference type="GO" id="GO:0030643">
    <property type="term" value="P:intracellular phosphate ion homeostasis"/>
    <property type="evidence" value="ECO:0007669"/>
    <property type="project" value="Ensembl"/>
</dbReference>
<dbReference type="GO" id="GO:0006883">
    <property type="term" value="P:intracellular sodium ion homeostasis"/>
    <property type="evidence" value="ECO:0007669"/>
    <property type="project" value="Ensembl"/>
</dbReference>
<dbReference type="GO" id="GO:0072051">
    <property type="term" value="P:juxtaglomerular apparatus development"/>
    <property type="evidence" value="ECO:0007669"/>
    <property type="project" value="Ensembl"/>
</dbReference>
<dbReference type="GO" id="GO:0007159">
    <property type="term" value="P:leukocyte cell-cell adhesion"/>
    <property type="evidence" value="ECO:0000314"/>
    <property type="project" value="BHF-UCL"/>
</dbReference>
<dbReference type="GO" id="GO:0006629">
    <property type="term" value="P:lipid metabolic process"/>
    <property type="evidence" value="ECO:0007669"/>
    <property type="project" value="Ensembl"/>
</dbReference>
<dbReference type="GO" id="GO:0072218">
    <property type="term" value="P:metanephric ascending thin limb development"/>
    <property type="evidence" value="ECO:0007669"/>
    <property type="project" value="Ensembl"/>
</dbReference>
<dbReference type="GO" id="GO:0072221">
    <property type="term" value="P:metanephric distal convoluted tubule development"/>
    <property type="evidence" value="ECO:0007669"/>
    <property type="project" value="Ensembl"/>
</dbReference>
<dbReference type="GO" id="GO:0072233">
    <property type="term" value="P:metanephric thick ascending limb development"/>
    <property type="evidence" value="ECO:0007669"/>
    <property type="project" value="Ensembl"/>
</dbReference>
<dbReference type="GO" id="GO:0060073">
    <property type="term" value="P:micturition"/>
    <property type="evidence" value="ECO:0007669"/>
    <property type="project" value="Ensembl"/>
</dbReference>
<dbReference type="GO" id="GO:0033555">
    <property type="term" value="P:multicellular organismal response to stress"/>
    <property type="evidence" value="ECO:0007669"/>
    <property type="project" value="Ensembl"/>
</dbReference>
<dbReference type="GO" id="GO:0008285">
    <property type="term" value="P:negative regulation of cell population proliferation"/>
    <property type="evidence" value="ECO:0000304"/>
    <property type="project" value="ProtInc"/>
</dbReference>
<dbReference type="GO" id="GO:1990266">
    <property type="term" value="P:neutrophil migration"/>
    <property type="evidence" value="ECO:0000314"/>
    <property type="project" value="BHF-UCL"/>
</dbReference>
<dbReference type="GO" id="GO:0002251">
    <property type="term" value="P:organ or tissue specific immune response"/>
    <property type="evidence" value="ECO:0007669"/>
    <property type="project" value="Ensembl"/>
</dbReference>
<dbReference type="GO" id="GO:0055075">
    <property type="term" value="P:potassium ion homeostasis"/>
    <property type="evidence" value="ECO:0007669"/>
    <property type="project" value="Ensembl"/>
</dbReference>
<dbReference type="GO" id="GO:0072665">
    <property type="term" value="P:protein localization to vacuole"/>
    <property type="evidence" value="ECO:0007669"/>
    <property type="project" value="Ensembl"/>
</dbReference>
<dbReference type="GO" id="GO:0044861">
    <property type="term" value="P:protein transport into plasma membrane raft"/>
    <property type="evidence" value="ECO:0007669"/>
    <property type="project" value="Ensembl"/>
</dbReference>
<dbReference type="GO" id="GO:0008217">
    <property type="term" value="P:regulation of blood pressure"/>
    <property type="evidence" value="ECO:0007669"/>
    <property type="project" value="Ensembl"/>
</dbReference>
<dbReference type="GO" id="GO:0051223">
    <property type="term" value="P:regulation of protein transport"/>
    <property type="evidence" value="ECO:0007669"/>
    <property type="project" value="Ensembl"/>
</dbReference>
<dbReference type="GO" id="GO:0035809">
    <property type="term" value="P:regulation of urine volume"/>
    <property type="evidence" value="ECO:0007669"/>
    <property type="project" value="Ensembl"/>
</dbReference>
<dbReference type="GO" id="GO:0070294">
    <property type="term" value="P:renal sodium ion absorption"/>
    <property type="evidence" value="ECO:0007669"/>
    <property type="project" value="Ensembl"/>
</dbReference>
<dbReference type="GO" id="GO:0097744">
    <property type="term" value="P:renal urate salt excretion"/>
    <property type="evidence" value="ECO:0007669"/>
    <property type="project" value="Ensembl"/>
</dbReference>
<dbReference type="GO" id="GO:0003091">
    <property type="term" value="P:renal water homeostasis"/>
    <property type="evidence" value="ECO:0007669"/>
    <property type="project" value="Ensembl"/>
</dbReference>
<dbReference type="GO" id="GO:0032496">
    <property type="term" value="P:response to lipopolysaccharide"/>
    <property type="evidence" value="ECO:0007669"/>
    <property type="project" value="Ensembl"/>
</dbReference>
<dbReference type="GO" id="GO:0009414">
    <property type="term" value="P:response to water deprivation"/>
    <property type="evidence" value="ECO:0007669"/>
    <property type="project" value="Ensembl"/>
</dbReference>
<dbReference type="GO" id="GO:0009410">
    <property type="term" value="P:response to xenobiotic stimulus"/>
    <property type="evidence" value="ECO:0007669"/>
    <property type="project" value="Ensembl"/>
</dbReference>
<dbReference type="GO" id="GO:0008380">
    <property type="term" value="P:RNA splicing"/>
    <property type="evidence" value="ECO:0007669"/>
    <property type="project" value="Ensembl"/>
</dbReference>
<dbReference type="GO" id="GO:0033209">
    <property type="term" value="P:tumor necrosis factor-mediated signaling pathway"/>
    <property type="evidence" value="ECO:0007669"/>
    <property type="project" value="Ensembl"/>
</dbReference>
<dbReference type="GO" id="GO:0015747">
    <property type="term" value="P:urate transport"/>
    <property type="evidence" value="ECO:0007669"/>
    <property type="project" value="Ensembl"/>
</dbReference>
<dbReference type="GO" id="GO:0071918">
    <property type="term" value="P:urea transmembrane transport"/>
    <property type="evidence" value="ECO:0007669"/>
    <property type="project" value="Ensembl"/>
</dbReference>
<dbReference type="CDD" id="cd00054">
    <property type="entry name" value="EGF_CA"/>
    <property type="match status" value="2"/>
</dbReference>
<dbReference type="FunFam" id="2.60.40.4100:FF:000001">
    <property type="entry name" value="alpha-tectorin isoform X1"/>
    <property type="match status" value="1"/>
</dbReference>
<dbReference type="FunFam" id="2.10.25.10:FF:000038">
    <property type="entry name" value="Fibrillin 2"/>
    <property type="match status" value="1"/>
</dbReference>
<dbReference type="FunFam" id="2.60.40.3210:FF:000003">
    <property type="entry name" value="Glycoprotein 2"/>
    <property type="match status" value="1"/>
</dbReference>
<dbReference type="FunFam" id="2.10.25.10:FF:000644">
    <property type="entry name" value="Uromodulin"/>
    <property type="match status" value="1"/>
</dbReference>
<dbReference type="FunFam" id="2.10.25.10:FF:000678">
    <property type="entry name" value="Uromodulin"/>
    <property type="match status" value="1"/>
</dbReference>
<dbReference type="Gene3D" id="2.10.25.10">
    <property type="entry name" value="Laminin"/>
    <property type="match status" value="3"/>
</dbReference>
<dbReference type="Gene3D" id="2.60.40.4100">
    <property type="entry name" value="Zona pellucida, ZP-C domain"/>
    <property type="match status" value="1"/>
</dbReference>
<dbReference type="Gene3D" id="2.60.40.3210">
    <property type="entry name" value="Zona pellucida, ZP-N domain"/>
    <property type="match status" value="1"/>
</dbReference>
<dbReference type="InterPro" id="IPR001881">
    <property type="entry name" value="EGF-like_Ca-bd_dom"/>
</dbReference>
<dbReference type="InterPro" id="IPR000742">
    <property type="entry name" value="EGF-like_dom"/>
</dbReference>
<dbReference type="InterPro" id="IPR000152">
    <property type="entry name" value="EGF-type_Asp/Asn_hydroxyl_site"/>
</dbReference>
<dbReference type="InterPro" id="IPR018097">
    <property type="entry name" value="EGF_Ca-bd_CS"/>
</dbReference>
<dbReference type="InterPro" id="IPR024731">
    <property type="entry name" value="EGF_dom"/>
</dbReference>
<dbReference type="InterPro" id="IPR009030">
    <property type="entry name" value="Growth_fac_rcpt_cys_sf"/>
</dbReference>
<dbReference type="InterPro" id="IPR049883">
    <property type="entry name" value="NOTCH1_EGF-like"/>
</dbReference>
<dbReference type="InterPro" id="IPR055355">
    <property type="entry name" value="ZP-C"/>
</dbReference>
<dbReference type="InterPro" id="IPR042235">
    <property type="entry name" value="ZP-C_dom"/>
</dbReference>
<dbReference type="InterPro" id="IPR055356">
    <property type="entry name" value="ZP-N"/>
</dbReference>
<dbReference type="InterPro" id="IPR048290">
    <property type="entry name" value="ZP_chr"/>
</dbReference>
<dbReference type="InterPro" id="IPR001507">
    <property type="entry name" value="ZP_dom"/>
</dbReference>
<dbReference type="InterPro" id="IPR017977">
    <property type="entry name" value="ZP_dom_CS"/>
</dbReference>
<dbReference type="PANTHER" id="PTHR14002">
    <property type="entry name" value="ENDOGLIN/TGF-BETA RECEPTOR TYPE III"/>
    <property type="match status" value="1"/>
</dbReference>
<dbReference type="PANTHER" id="PTHR14002:SF40">
    <property type="entry name" value="UROMODULIN"/>
    <property type="match status" value="1"/>
</dbReference>
<dbReference type="Pfam" id="PF23283">
    <property type="entry name" value="D8C_UMOD"/>
    <property type="match status" value="1"/>
</dbReference>
<dbReference type="Pfam" id="PF12947">
    <property type="entry name" value="EGF_3"/>
    <property type="match status" value="1"/>
</dbReference>
<dbReference type="Pfam" id="PF07645">
    <property type="entry name" value="EGF_CA"/>
    <property type="match status" value="2"/>
</dbReference>
<dbReference type="Pfam" id="PF00100">
    <property type="entry name" value="Zona_pellucida"/>
    <property type="match status" value="1"/>
</dbReference>
<dbReference type="Pfam" id="PF23344">
    <property type="entry name" value="ZP-N"/>
    <property type="match status" value="1"/>
</dbReference>
<dbReference type="PRINTS" id="PR00023">
    <property type="entry name" value="ZPELLUCIDA"/>
</dbReference>
<dbReference type="SMART" id="SM00181">
    <property type="entry name" value="EGF"/>
    <property type="match status" value="3"/>
</dbReference>
<dbReference type="SMART" id="SM00179">
    <property type="entry name" value="EGF_CA"/>
    <property type="match status" value="2"/>
</dbReference>
<dbReference type="SMART" id="SM00241">
    <property type="entry name" value="ZP"/>
    <property type="match status" value="1"/>
</dbReference>
<dbReference type="SUPFAM" id="SSF57184">
    <property type="entry name" value="Growth factor receptor domain"/>
    <property type="match status" value="1"/>
</dbReference>
<dbReference type="PROSITE" id="PS00010">
    <property type="entry name" value="ASX_HYDROXYL"/>
    <property type="match status" value="2"/>
</dbReference>
<dbReference type="PROSITE" id="PS01186">
    <property type="entry name" value="EGF_2"/>
    <property type="match status" value="3"/>
</dbReference>
<dbReference type="PROSITE" id="PS50026">
    <property type="entry name" value="EGF_3"/>
    <property type="match status" value="3"/>
</dbReference>
<dbReference type="PROSITE" id="PS01187">
    <property type="entry name" value="EGF_CA"/>
    <property type="match status" value="2"/>
</dbReference>
<dbReference type="PROSITE" id="PS00682">
    <property type="entry name" value="ZP_1"/>
    <property type="match status" value="1"/>
</dbReference>
<dbReference type="PROSITE" id="PS51034">
    <property type="entry name" value="ZP_2"/>
    <property type="match status" value="1"/>
</dbReference>